<gene>
    <name type="primary">AHNAK</name>
    <name type="synonym">PM227</name>
</gene>
<reference key="1">
    <citation type="journal article" date="2006" name="Nature">
        <title>Human chromosome 11 DNA sequence and analysis including novel gene identification.</title>
        <authorList>
            <person name="Taylor T.D."/>
            <person name="Noguchi H."/>
            <person name="Totoki Y."/>
            <person name="Toyoda A."/>
            <person name="Kuroki Y."/>
            <person name="Dewar K."/>
            <person name="Lloyd C."/>
            <person name="Itoh T."/>
            <person name="Takeda T."/>
            <person name="Kim D.-W."/>
            <person name="She X."/>
            <person name="Barlow K.F."/>
            <person name="Bloom T."/>
            <person name="Bruford E."/>
            <person name="Chang J.L."/>
            <person name="Cuomo C.A."/>
            <person name="Eichler E."/>
            <person name="FitzGerald M.G."/>
            <person name="Jaffe D.B."/>
            <person name="LaButti K."/>
            <person name="Nicol R."/>
            <person name="Park H.-S."/>
            <person name="Seaman C."/>
            <person name="Sougnez C."/>
            <person name="Yang X."/>
            <person name="Zimmer A.R."/>
            <person name="Zody M.C."/>
            <person name="Birren B.W."/>
            <person name="Nusbaum C."/>
            <person name="Fujiyama A."/>
            <person name="Hattori M."/>
            <person name="Rogers J."/>
            <person name="Lander E.S."/>
            <person name="Sakaki Y."/>
        </authorList>
    </citation>
    <scope>NUCLEOTIDE SEQUENCE [LARGE SCALE GENOMIC DNA]</scope>
</reference>
<reference key="2">
    <citation type="submission" date="2005-07" db="EMBL/GenBank/DDBJ databases">
        <authorList>
            <person name="Mural R.J."/>
            <person name="Istrail S."/>
            <person name="Sutton G."/>
            <person name="Florea L."/>
            <person name="Halpern A.L."/>
            <person name="Mobarry C.M."/>
            <person name="Lippert R."/>
            <person name="Walenz B."/>
            <person name="Shatkay H."/>
            <person name="Dew I."/>
            <person name="Miller J.R."/>
            <person name="Flanigan M.J."/>
            <person name="Edwards N.J."/>
            <person name="Bolanos R."/>
            <person name="Fasulo D."/>
            <person name="Halldorsson B.V."/>
            <person name="Hannenhalli S."/>
            <person name="Turner R."/>
            <person name="Yooseph S."/>
            <person name="Lu F."/>
            <person name="Nusskern D.R."/>
            <person name="Shue B.C."/>
            <person name="Zheng X.H."/>
            <person name="Zhong F."/>
            <person name="Delcher A.L."/>
            <person name="Huson D.H."/>
            <person name="Kravitz S.A."/>
            <person name="Mouchard L."/>
            <person name="Reinert K."/>
            <person name="Remington K.A."/>
            <person name="Clark A.G."/>
            <person name="Waterman M.S."/>
            <person name="Eichler E.E."/>
            <person name="Adams M.D."/>
            <person name="Hunkapiller M.W."/>
            <person name="Myers E.W."/>
            <person name="Venter J.C."/>
        </authorList>
    </citation>
    <scope>NUCLEOTIDE SEQUENCE [LARGE SCALE GENOMIC DNA]</scope>
</reference>
<reference key="3">
    <citation type="journal article" date="2004" name="Genome Res.">
        <title>The status, quality, and expansion of the NIH full-length cDNA project: the Mammalian Gene Collection (MGC).</title>
        <authorList>
            <consortium name="The MGC Project Team"/>
        </authorList>
    </citation>
    <scope>NUCLEOTIDE SEQUENCE [LARGE SCALE MRNA] (ISOFORM 2)</scope>
</reference>
<reference key="4">
    <citation type="journal article" date="1992" name="Proc. Natl. Acad. Sci. U.S.A.">
        <title>A human gene (AHNAK) encoding an unusually large protein with a 1.2-microns polyionic rod structure.</title>
        <authorList>
            <person name="Shtivelman E."/>
            <person name="Cohen F.E."/>
            <person name="Bishop J.M."/>
        </authorList>
    </citation>
    <scope>NUCLEOTIDE SEQUENCE [MRNA] OF 114-1930 (ISOFORM 1)</scope>
    <scope>NUCLEOTIDE SEQUENCE [MRNA] OF 4614-5890 (ISOFORM 1)</scope>
    <source>
        <tissue>Placenta</tissue>
    </source>
</reference>
<reference key="5">
    <citation type="journal article" date="1993" name="Proc. Natl. Acad. Sci. U.S.A.">
        <authorList>
            <person name="Shtivelman E."/>
            <person name="Cohen F.E."/>
            <person name="Bishop J.M."/>
        </authorList>
    </citation>
    <scope>ERRATUM OF PUBMED:1608957</scope>
</reference>
<reference key="6">
    <citation type="journal article" date="2006" name="Cell">
        <title>Global, in vivo, and site-specific phosphorylation dynamics in signaling networks.</title>
        <authorList>
            <person name="Olsen J.V."/>
            <person name="Blagoev B."/>
            <person name="Gnad F."/>
            <person name="Macek B."/>
            <person name="Kumar C."/>
            <person name="Mortensen P."/>
            <person name="Mann M."/>
        </authorList>
    </citation>
    <scope>PHOSPHORYLATION [LARGE SCALE ANALYSIS] AT SER-41; SER-93; THR-490; SER-511; THR-4100; THR-4766; SER-5077; SER-5110; SER-5448; SER-5552 AND SER-5752</scope>
    <scope>IDENTIFICATION BY MASS SPECTROMETRY [LARGE SCALE ANALYSIS]</scope>
    <source>
        <tissue>Cervix carcinoma</tissue>
    </source>
</reference>
<reference key="7">
    <citation type="journal article" date="2006" name="Nat. Biotechnol.">
        <title>A probability-based approach for high-throughput protein phosphorylation analysis and site localization.</title>
        <authorList>
            <person name="Beausoleil S.A."/>
            <person name="Villen J."/>
            <person name="Gerber S.A."/>
            <person name="Rush J."/>
            <person name="Gygi S.P."/>
        </authorList>
    </citation>
    <scope>PHOSPHORYLATION [LARGE SCALE ANALYSIS] AT SER-41; SER-511; SER-5731 AND SER-5763</scope>
    <scope>IDENTIFICATION BY MASS SPECTROMETRY [LARGE SCALE ANALYSIS]</scope>
    <source>
        <tissue>Cervix carcinoma</tissue>
    </source>
</reference>
<reference key="8">
    <citation type="journal article" date="2007" name="FASEB J.">
        <title>AHNAK, a novel component of the dysferlin protein complex, redistributes to the cytoplasm with dysferlin during skeletal muscle regeneration.</title>
        <authorList>
            <person name="Huang Y."/>
            <person name="Laval S.H."/>
            <person name="van Remoortere A."/>
            <person name="Baudier J."/>
            <person name="Benaud C."/>
            <person name="Anderson L.V."/>
            <person name="Straub V."/>
            <person name="Deelder A."/>
            <person name="Frants R.R."/>
            <person name="den Dunnen J.T."/>
            <person name="Bushby K."/>
            <person name="van der Maarel S.M."/>
        </authorList>
    </citation>
    <scope>INTERACTION WITH DYSF</scope>
</reference>
<reference key="9">
    <citation type="journal article" date="2007" name="J. Proteome Res.">
        <title>Improved titanium dioxide enrichment of phosphopeptides from HeLa cells and high confident phosphopeptide identification by cross-validation of MS/MS and MS/MS/MS spectra.</title>
        <authorList>
            <person name="Yu L.R."/>
            <person name="Zhu Z."/>
            <person name="Chan K.C."/>
            <person name="Issaq H.J."/>
            <person name="Dimitrov D.S."/>
            <person name="Veenstra T.D."/>
        </authorList>
    </citation>
    <scope>PHOSPHORYLATION [LARGE SCALE ANALYSIS] AT THR-490; SER-511; SER-4986; SER-5099; SER-5110 AND SER-5552</scope>
    <scope>IDENTIFICATION BY MASS SPECTROMETRY [LARGE SCALE ANALYSIS]</scope>
    <source>
        <tissue>Cervix carcinoma</tissue>
    </source>
</reference>
<reference key="10">
    <citation type="journal article" date="2008" name="J. Proteome Res.">
        <title>Phosphorylation analysis of primary human T lymphocytes using sequential IMAC and titanium oxide enrichment.</title>
        <authorList>
            <person name="Carrascal M."/>
            <person name="Ovelleiro D."/>
            <person name="Casas V."/>
            <person name="Gay M."/>
            <person name="Abian J."/>
        </authorList>
    </citation>
    <scope>PHOSPHORYLATION [LARGE SCALE ANALYSIS] AT SER-5749 AND SER-5752</scope>
    <scope>IDENTIFICATION BY MASS SPECTROMETRY [LARGE SCALE ANALYSIS]</scope>
    <source>
        <tissue>T-cell</tissue>
    </source>
</reference>
<reference key="11">
    <citation type="journal article" date="2008" name="Mol. Cell">
        <title>Kinase-selective enrichment enables quantitative phosphoproteomics of the kinome across the cell cycle.</title>
        <authorList>
            <person name="Daub H."/>
            <person name="Olsen J.V."/>
            <person name="Bairlein M."/>
            <person name="Gnad F."/>
            <person name="Oppermann F.S."/>
            <person name="Korner R."/>
            <person name="Greff Z."/>
            <person name="Keri G."/>
            <person name="Stemmann O."/>
            <person name="Mann M."/>
        </authorList>
    </citation>
    <scope>PHOSPHORYLATION [LARGE SCALE ANALYSIS] AT SER-41 AND SER-511</scope>
    <scope>IDENTIFICATION BY MASS SPECTROMETRY [LARGE SCALE ANALYSIS]</scope>
    <source>
        <tissue>Cervix carcinoma</tissue>
    </source>
</reference>
<reference key="12">
    <citation type="journal article" date="2008" name="Proc. Natl. Acad. Sci. U.S.A.">
        <title>A quantitative atlas of mitotic phosphorylation.</title>
        <authorList>
            <person name="Dephoure N."/>
            <person name="Zhou C."/>
            <person name="Villen J."/>
            <person name="Beausoleil S.A."/>
            <person name="Bakalarski C.E."/>
            <person name="Elledge S.J."/>
            <person name="Gygi S.P."/>
        </authorList>
    </citation>
    <scope>PHOSPHORYLATION [LARGE SCALE ANALYSIS] AT SER-41; SER-93; SER-511; SER-570; SER-793; SER-4903; SER-4960; SER-4993; THR-5009; SER-5099; THR-5415; SER-5731; SER-5749; SER-5752; SER-5763; SER-5780; SER-5782; SER-5793; THR-5794; SER-5830 AND SER-5841</scope>
    <scope>IDENTIFICATION BY MASS SPECTROMETRY [LARGE SCALE ANALYSIS]</scope>
    <source>
        <tissue>Cervix carcinoma</tissue>
    </source>
</reference>
<reference key="13">
    <citation type="journal article" date="2008" name="Proteomics">
        <title>Large-scale phosphoproteome analysis of human liver tissue by enrichment and fractionation of phosphopeptides with strong anion exchange chromatography.</title>
        <authorList>
            <person name="Han G."/>
            <person name="Ye M."/>
            <person name="Zhou H."/>
            <person name="Jiang X."/>
            <person name="Feng S."/>
            <person name="Jiang X."/>
            <person name="Tian R."/>
            <person name="Wan D."/>
            <person name="Zou H."/>
            <person name="Gu J."/>
        </authorList>
    </citation>
    <scope>IDENTIFICATION BY MASS SPECTROMETRY [LARGE SCALE ANALYSIS]</scope>
    <source>
        <tissue>Liver</tissue>
    </source>
</reference>
<reference key="14">
    <citation type="journal article" date="2009" name="Anal. Chem.">
        <title>Lys-N and trypsin cover complementary parts of the phosphoproteome in a refined SCX-based approach.</title>
        <authorList>
            <person name="Gauci S."/>
            <person name="Helbig A.O."/>
            <person name="Slijper M."/>
            <person name="Krijgsveld J."/>
            <person name="Heck A.J."/>
            <person name="Mohammed S."/>
        </authorList>
    </citation>
    <scope>IDENTIFICATION BY MASS SPECTROMETRY [LARGE SCALE ANALYSIS]</scope>
</reference>
<reference key="15">
    <citation type="journal article" date="2009" name="Mol. Cell. Proteomics">
        <title>Large-scale proteomics analysis of the human kinome.</title>
        <authorList>
            <person name="Oppermann F.S."/>
            <person name="Gnad F."/>
            <person name="Olsen J.V."/>
            <person name="Hornberger R."/>
            <person name="Greff Z."/>
            <person name="Keri G."/>
            <person name="Mann M."/>
            <person name="Daub H."/>
        </authorList>
    </citation>
    <scope>PHOSPHORYLATION [LARGE SCALE ANALYSIS] AT SER-511 AND SER-5752</scope>
    <scope>IDENTIFICATION BY MASS SPECTROMETRY [LARGE SCALE ANALYSIS]</scope>
</reference>
<reference key="16">
    <citation type="journal article" date="2009" name="Sci. Signal.">
        <title>Quantitative phosphoproteomic analysis of T cell receptor signaling reveals system-wide modulation of protein-protein interactions.</title>
        <authorList>
            <person name="Mayya V."/>
            <person name="Lundgren D.H."/>
            <person name="Hwang S.-I."/>
            <person name="Rezaul K."/>
            <person name="Wu L."/>
            <person name="Eng J.K."/>
            <person name="Rodionov V."/>
            <person name="Han D.K."/>
        </authorList>
    </citation>
    <scope>PHOSPHORYLATION [LARGE SCALE ANALYSIS] AT SER-511; SER-570; SER-2397; SER-5448; SER-5731; SER-5749; SER-5752 AND SER-5763</scope>
    <scope>IDENTIFICATION BY MASS SPECTROMETRY [LARGE SCALE ANALYSIS]</scope>
    <source>
        <tissue>Leukemic T-cell</tissue>
    </source>
</reference>
<reference key="17">
    <citation type="journal article" date="2010" name="Sci. Signal.">
        <title>Quantitative phosphoproteomics reveals widespread full phosphorylation site occupancy during mitosis.</title>
        <authorList>
            <person name="Olsen J.V."/>
            <person name="Vermeulen M."/>
            <person name="Santamaria A."/>
            <person name="Kumar C."/>
            <person name="Miller M.L."/>
            <person name="Jensen L.J."/>
            <person name="Gnad F."/>
            <person name="Cox J."/>
            <person name="Jensen T.S."/>
            <person name="Nigg E.A."/>
            <person name="Brunak S."/>
            <person name="Mann M."/>
        </authorList>
    </citation>
    <scope>PHOSPHORYLATION [LARGE SCALE ANALYSIS] AT SER-41; SER-93; THR-101; SER-135; SER-177; SER-210; SER-212; SER-216; THR-490; SER-511; SER-559; SER-570; SER-793; SER-1068; THR-1192; SER-1286; THR-1986; THR-2181; THR-2309; SER-2397; SER-2670; SER-2798; THR-2832; THR-2845; SER-3054; SER-3182; SER-3409; SER-3412; SER-3426; THR-3716; SER-3836; SER-3964; SER-4092; THR-4100; SER-4220; THR-4430; SER-4516; SER-4684; SER-4812; SER-4960; SER-4986; SER-5077; SER-5099; SER-5110; SER-5125; SER-5332; SER-5386; SER-5400; SER-5448; SER-5552; SER-5620; SER-5731; SER-5739; SER-5752; SER-5763; SER-5780; SER-5782; SER-5790; THR-5824; SER-5830; SER-5841 AND SER-5857</scope>
    <scope>IDENTIFICATION BY MASS SPECTROMETRY [LARGE SCALE ANALYSIS]</scope>
    <source>
        <tissue>Cervix carcinoma</tissue>
    </source>
</reference>
<reference key="18">
    <citation type="journal article" date="2011" name="BMC Syst. Biol.">
        <title>Initial characterization of the human central proteome.</title>
        <authorList>
            <person name="Burkard T.R."/>
            <person name="Planyavsky M."/>
            <person name="Kaupe I."/>
            <person name="Breitwieser F.P."/>
            <person name="Buerckstuemmer T."/>
            <person name="Bennett K.L."/>
            <person name="Superti-Furga G."/>
            <person name="Colinge J."/>
        </authorList>
    </citation>
    <scope>IDENTIFICATION BY MASS SPECTROMETRY [LARGE SCALE ANALYSIS]</scope>
</reference>
<reference key="19">
    <citation type="journal article" date="2011" name="Sci. Signal.">
        <title>System-wide temporal characterization of the proteome and phosphoproteome of human embryonic stem cell differentiation.</title>
        <authorList>
            <person name="Rigbolt K.T."/>
            <person name="Prokhorova T.A."/>
            <person name="Akimov V."/>
            <person name="Henningsen J."/>
            <person name="Johansen P.T."/>
            <person name="Kratchmarova I."/>
            <person name="Kassem M."/>
            <person name="Mann M."/>
            <person name="Olsen J.V."/>
            <person name="Blagoev B."/>
        </authorList>
    </citation>
    <scope>PHOSPHORYLATION [LARGE SCALE ANALYSIS] AT SER-93; SER-135; SER-177; THR-490; SER-511; SER-559; SER-5731 AND SER-5841</scope>
    <scope>IDENTIFICATION BY MASS SPECTROMETRY [LARGE SCALE ANALYSIS]</scope>
</reference>
<reference key="20">
    <citation type="journal article" date="2012" name="Proc. Natl. Acad. Sci. U.S.A.">
        <title>N-terminal acetylome analyses and functional insights of the N-terminal acetyltransferase NatB.</title>
        <authorList>
            <person name="Van Damme P."/>
            <person name="Lasa M."/>
            <person name="Polevoda B."/>
            <person name="Gazquez C."/>
            <person name="Elosegui-Artola A."/>
            <person name="Kim D.S."/>
            <person name="De Juan-Pardo E."/>
            <person name="Demeyer K."/>
            <person name="Hole K."/>
            <person name="Larrea E."/>
            <person name="Timmerman E."/>
            <person name="Prieto J."/>
            <person name="Arnesen T."/>
            <person name="Sherman F."/>
            <person name="Gevaert K."/>
            <person name="Aldabe R."/>
        </authorList>
    </citation>
    <scope>ACETYLATION [LARGE SCALE ANALYSIS] AT MET-1</scope>
    <scope>IDENTIFICATION BY MASS SPECTROMETRY [LARGE SCALE ANALYSIS]</scope>
</reference>
<reference key="21">
    <citation type="journal article" date="2013" name="J. Proteome Res.">
        <title>Toward a comprehensive characterization of a human cancer cell phosphoproteome.</title>
        <authorList>
            <person name="Zhou H."/>
            <person name="Di Palma S."/>
            <person name="Preisinger C."/>
            <person name="Peng M."/>
            <person name="Polat A.N."/>
            <person name="Heck A.J."/>
            <person name="Mohammed S."/>
        </authorList>
    </citation>
    <scope>PHOSPHORYLATION [LARGE SCALE ANALYSIS] AT SER-41; SER-93; SER-135; THR-158; SER-177; SER-210; SER-212; SER-216; SER-220; SER-332; SER-337; SER-379; THR-490; SER-511; THR-551; THR-553; SER-570; SER-572; SER-658; SER-793; SER-819; SER-1068; SER-1196; SER-1286; SER-1298; SER-1654; SER-1856; SER-1923; SER-1990; SER-2092; SER-2118; SER-2287; SER-2397; SER-2580; SER-2670; SER-2798; THR-2845; SER-3054; SER-3182; SER-3362; SER-3412; SER-3426; THR-3716; SER-3836; SER-3964; SER-4002; SER-4092; THR-4100; SER-4220; SER-4258; SER-4360; THR-4430; SER-4460; SER-4520; THR-4564; SER-4684; THR-4766; SER-4812; SER-4900; SER-4908; SER-4953; SER-4986; SER-5099; SER-5110; SER-5318; SER-5332; SER-5369; SER-5393; SER-5400; SER-5448; SER-5519; SER-5530; SER-5552; SER-5620; SER-5641; SER-5731; SER-5739; SER-5749; SER-5752; SER-5762; SER-5763; THR-5824; SER-5830; SER-5841; THR-5845 AND SER-5857</scope>
    <scope>IDENTIFICATION BY MASS SPECTROMETRY [LARGE SCALE ANALYSIS]</scope>
    <source>
        <tissue>Cervix carcinoma</tissue>
        <tissue>Erythroleukemia</tissue>
    </source>
</reference>
<reference key="22">
    <citation type="journal article" date="2014" name="J. Proteomics">
        <title>An enzyme assisted RP-RPLC approach for in-depth analysis of human liver phosphoproteome.</title>
        <authorList>
            <person name="Bian Y."/>
            <person name="Song C."/>
            <person name="Cheng K."/>
            <person name="Dong M."/>
            <person name="Wang F."/>
            <person name="Huang J."/>
            <person name="Sun D."/>
            <person name="Wang L."/>
            <person name="Ye M."/>
            <person name="Zou H."/>
        </authorList>
    </citation>
    <scope>PHOSPHORYLATION [LARGE SCALE ANALYSIS] AT SER-93; SER-115; SER-135; SER-210; SER-212; THR-218; SER-256; SER-337; SER-379; SER-470; THR-490; SER-511; SER-570; SER-1010; SER-1042; SER-1068; SER-1170; SER-1580; SER-2138; SER-2600; SER-2708; SER-2728; SER-3092; SER-3220; SER-3412; SER-3544; SER-3746; SER-3766; SER-3874; SER-4022; THR-4100; SER-4150; SER-4278; SER-4406; SER-4425; SER-4480; SER-4486; THR-4564; SER-4722; SER-4960; SER-5099; SER-5110; SER-5261; SER-5400; SER-5448; SER-5577; SER-5620; SER-5641; SER-5731; SER-5739; SER-5749; SER-5752; SER-5780; SER-5782; SER-5830; SER-5841; SER-5851; SER-5857 AND SER-5863</scope>
    <scope>IDENTIFICATION BY MASS SPECTROMETRY [LARGE SCALE ANALYSIS]</scope>
    <source>
        <tissue>Liver</tissue>
    </source>
</reference>
<reference key="23">
    <citation type="journal article" date="2014" name="Mol. Cell. Proteomics">
        <title>Immunoaffinity enrichment and mass spectrometry analysis of protein methylation.</title>
        <authorList>
            <person name="Guo A."/>
            <person name="Gu H."/>
            <person name="Zhou J."/>
            <person name="Mulhern D."/>
            <person name="Wang Y."/>
            <person name="Lee K.A."/>
            <person name="Yang V."/>
            <person name="Aguiar M."/>
            <person name="Kornhauser J."/>
            <person name="Jia X."/>
            <person name="Ren J."/>
            <person name="Beausoleil S.A."/>
            <person name="Silva J.C."/>
            <person name="Vemulapalli V."/>
            <person name="Bedford M.T."/>
            <person name="Comb M.J."/>
        </authorList>
    </citation>
    <scope>METHYLATION [LARGE SCALE ANALYSIS] AT ARG-270; LYS-1208; LYS-1666; LYS-1868; LYS-1935; LYS-2002 AND LYS-2130</scope>
    <scope>IDENTIFICATION BY MASS SPECTROMETRY [LARGE SCALE ANALYSIS]</scope>
    <source>
        <tissue>Colon carcinoma</tissue>
    </source>
</reference>
<reference key="24">
    <citation type="journal article" date="2014" name="Nat. Struct. Mol. Biol.">
        <title>Uncovering global SUMOylation signaling networks in a site-specific manner.</title>
        <authorList>
            <person name="Hendriks I.A."/>
            <person name="D'Souza R.C."/>
            <person name="Yang B."/>
            <person name="Verlaan-de Vries M."/>
            <person name="Mann M."/>
            <person name="Vertegaal A.C."/>
        </authorList>
    </citation>
    <scope>SUMOYLATION [LARGE SCALE ANALYSIS] AT LYS-134</scope>
    <scope>IDENTIFICATION BY MASS SPECTROMETRY [LARGE SCALE ANALYSIS]</scope>
</reference>
<reference key="25">
    <citation type="journal article" date="2014" name="Proc. Natl. Acad. Sci. U.S.A.">
        <title>Mapping of SUMO sites and analysis of SUMOylation changes induced by external stimuli.</title>
        <authorList>
            <person name="Impens F."/>
            <person name="Radoshevich L."/>
            <person name="Cossart P."/>
            <person name="Ribet D."/>
        </authorList>
    </citation>
    <scope>SUMOYLATION [LARGE SCALE ANALYSIS] AT LYS-134; LYS-942; LYS-961; LYS-2132; LYS-2575; LYS-2594; LYS-2703; LYS-2722; LYS-2959; LYS-3087; LYS-3215; LYS-3667; LYS-3760; LYS-3869; LYS-3997; LYS-4016; LYS-4253; LYS-4272; LYS-4381; LYS-4400; LYS-4455 AND LYS-4474</scope>
    <scope>IDENTIFICATION BY MASS SPECTROMETRY [LARGE SCALE ANALYSIS]</scope>
</reference>
<reference key="26">
    <citation type="journal article" date="2015" name="Mol. Cell. Proteomics">
        <title>System-wide analysis of SUMOylation dynamics in response to replication stress reveals novel small ubiquitin-like modified target proteins and acceptor lysines relevant for genome stability.</title>
        <authorList>
            <person name="Xiao Z."/>
            <person name="Chang J.G."/>
            <person name="Hendriks I.A."/>
            <person name="Sigurdsson J.O."/>
            <person name="Olsen J.V."/>
            <person name="Vertegaal A.C."/>
        </authorList>
    </citation>
    <scope>SUMOYLATION [LARGE SCALE ANALYSIS] AT LYS-712 AND LYS-961</scope>
    <scope>IDENTIFICATION BY MASS SPECTROMETRY [LARGE SCALE ANALYSIS]</scope>
</reference>
<reference key="27">
    <citation type="journal article" date="2015" name="Proteomics">
        <title>N-terminome analysis of the human mitochondrial proteome.</title>
        <authorList>
            <person name="Vaca Jacome A.S."/>
            <person name="Rabilloud T."/>
            <person name="Schaeffer-Reiss C."/>
            <person name="Rompais M."/>
            <person name="Ayoub D."/>
            <person name="Lane L."/>
            <person name="Bairoch A."/>
            <person name="Van Dorsselaer A."/>
            <person name="Carapito C."/>
        </authorList>
    </citation>
    <scope>IDENTIFICATION BY MASS SPECTROMETRY [LARGE SCALE ANALYSIS]</scope>
</reference>
<reference key="28">
    <citation type="journal article" date="2017" name="Nat. Struct. Mol. Biol.">
        <title>Site-specific mapping of the human SUMO proteome reveals co-modification with phosphorylation.</title>
        <authorList>
            <person name="Hendriks I.A."/>
            <person name="Lyon D."/>
            <person name="Young C."/>
            <person name="Jensen L.J."/>
            <person name="Vertegaal A.C."/>
            <person name="Nielsen M.L."/>
        </authorList>
    </citation>
    <scope>SUMOYLATION [LARGE SCALE ANALYSIS] AT LYS-181; LYS-712; LYS-763; LYS-891; LYS-1726; LYS-2062; LYS-2524; LYS-2908 AND LYS-5623</scope>
    <scope>IDENTIFICATION BY MASS SPECTROMETRY [LARGE SCALE ANALYSIS]</scope>
</reference>
<accession>Q09666</accession>
<accession>A1A586</accession>
<keyword id="KW-0002">3D-structure</keyword>
<keyword id="KW-0007">Acetylation</keyword>
<keyword id="KW-0025">Alternative splicing</keyword>
<keyword id="KW-1017">Isopeptide bond</keyword>
<keyword id="KW-0488">Methylation</keyword>
<keyword id="KW-0539">Nucleus</keyword>
<keyword id="KW-0597">Phosphoprotein</keyword>
<keyword id="KW-1267">Proteomics identification</keyword>
<keyword id="KW-1185">Reference proteome</keyword>
<keyword id="KW-0677">Repeat</keyword>
<keyword id="KW-0832">Ubl conjugation</keyword>
<protein>
    <recommendedName>
        <fullName>Neuroblast differentiation-associated protein AHNAK</fullName>
    </recommendedName>
    <alternativeName>
        <fullName>Desmoyokin</fullName>
    </alternativeName>
</protein>
<evidence type="ECO:0000255" key="1"/>
<evidence type="ECO:0000255" key="2">
    <source>
        <dbReference type="PROSITE-ProRule" id="PRU00143"/>
    </source>
</evidence>
<evidence type="ECO:0000256" key="3">
    <source>
        <dbReference type="SAM" id="MobiDB-lite"/>
    </source>
</evidence>
<evidence type="ECO:0000269" key="4">
    <source>
    </source>
</evidence>
<evidence type="ECO:0000303" key="5">
    <source>
    </source>
</evidence>
<evidence type="ECO:0000305" key="6"/>
<evidence type="ECO:0007744" key="7">
    <source>
    </source>
</evidence>
<evidence type="ECO:0007744" key="8">
    <source>
    </source>
</evidence>
<evidence type="ECO:0007744" key="9">
    <source>
    </source>
</evidence>
<evidence type="ECO:0007744" key="10">
    <source>
    </source>
</evidence>
<evidence type="ECO:0007744" key="11">
    <source>
    </source>
</evidence>
<evidence type="ECO:0007744" key="12">
    <source>
    </source>
</evidence>
<evidence type="ECO:0007744" key="13">
    <source>
    </source>
</evidence>
<evidence type="ECO:0007744" key="14">
    <source>
    </source>
</evidence>
<evidence type="ECO:0007744" key="15">
    <source>
    </source>
</evidence>
<evidence type="ECO:0007744" key="16">
    <source>
    </source>
</evidence>
<evidence type="ECO:0007744" key="17">
    <source>
    </source>
</evidence>
<evidence type="ECO:0007744" key="18">
    <source>
    </source>
</evidence>
<evidence type="ECO:0007744" key="19">
    <source>
    </source>
</evidence>
<evidence type="ECO:0007744" key="20">
    <source>
    </source>
</evidence>
<evidence type="ECO:0007744" key="21">
    <source>
    </source>
</evidence>
<evidence type="ECO:0007744" key="22">
    <source>
    </source>
</evidence>
<evidence type="ECO:0007744" key="23">
    <source>
    </source>
</evidence>
<evidence type="ECO:0007744" key="24">
    <source>
    </source>
</evidence>
<proteinExistence type="evidence at protein level"/>
<feature type="chain" id="PRO_0000064504" description="Neuroblast differentiation-associated protein AHNAK">
    <location>
        <begin position="1"/>
        <end position="5890"/>
    </location>
</feature>
<feature type="domain" description="PDZ" evidence="2">
    <location>
        <begin position="9"/>
        <end position="90"/>
    </location>
</feature>
<feature type="region of interest" description="Disordered" evidence="3">
    <location>
        <begin position="314"/>
        <end position="347"/>
    </location>
</feature>
<feature type="region of interest" description="Disordered" evidence="3">
    <location>
        <begin position="545"/>
        <end position="564"/>
    </location>
</feature>
<feature type="region of interest" description="Disordered" evidence="3">
    <location>
        <begin position="970"/>
        <end position="993"/>
    </location>
</feature>
<feature type="region of interest" description="Disordered" evidence="3">
    <location>
        <begin position="1414"/>
        <end position="1438"/>
    </location>
</feature>
<feature type="region of interest" description="Disordered" evidence="3">
    <location>
        <begin position="1741"/>
        <end position="1766"/>
    </location>
</feature>
<feature type="region of interest" description="Disordered" evidence="3">
    <location>
        <begin position="2410"/>
        <end position="2439"/>
    </location>
</feature>
<feature type="region of interest" description="Disordered" evidence="3">
    <location>
        <begin position="2542"/>
        <end position="2567"/>
    </location>
</feature>
<feature type="region of interest" description="Disordered" evidence="3">
    <location>
        <begin position="2610"/>
        <end position="2633"/>
    </location>
</feature>
<feature type="region of interest" description="Disordered" evidence="3">
    <location>
        <begin position="2667"/>
        <end position="2695"/>
    </location>
</feature>
<feature type="region of interest" description="Disordered" evidence="3">
    <location>
        <begin position="2853"/>
        <end position="2882"/>
    </location>
</feature>
<feature type="region of interest" description="Disordered" evidence="3">
    <location>
        <begin position="2921"/>
        <end position="2951"/>
    </location>
</feature>
<feature type="region of interest" description="Disordered" evidence="3">
    <location>
        <begin position="3122"/>
        <end position="3145"/>
    </location>
</feature>
<feature type="region of interest" description="Disordered" evidence="3">
    <location>
        <begin position="3702"/>
        <end position="3730"/>
    </location>
</feature>
<feature type="region of interest" description="Disordered" evidence="3">
    <location>
        <begin position="3763"/>
        <end position="3799"/>
    </location>
</feature>
<feature type="region of interest" description="Disordered" evidence="3">
    <location>
        <begin position="4093"/>
        <end position="4117"/>
    </location>
</feature>
<feature type="region of interest" description="Disordered" evidence="3">
    <location>
        <begin position="4147"/>
        <end position="4169"/>
    </location>
</feature>
<feature type="region of interest" description="Disordered" evidence="3">
    <location>
        <begin position="4416"/>
        <end position="4447"/>
    </location>
</feature>
<feature type="region of interest" description="Disordered" evidence="3">
    <location>
        <begin position="4488"/>
        <end position="4508"/>
    </location>
</feature>
<feature type="region of interest" description="Disordered" evidence="3">
    <location>
        <begin position="4550"/>
        <end position="4581"/>
    </location>
</feature>
<feature type="region of interest" description="Disordered" evidence="3">
    <location>
        <begin position="4611"/>
        <end position="4631"/>
    </location>
</feature>
<feature type="region of interest" description="Disordered" evidence="3">
    <location>
        <begin position="4746"/>
        <end position="4768"/>
    </location>
</feature>
<feature type="region of interest" description="Disordered" evidence="3">
    <location>
        <begin position="4880"/>
        <end position="4904"/>
    </location>
</feature>
<feature type="region of interest" description="Disordered" evidence="3">
    <location>
        <begin position="5716"/>
        <end position="5890"/>
    </location>
</feature>
<feature type="short sequence motif" description="Nuclear localization signal" evidence="1">
    <location>
        <begin position="4971"/>
        <end position="4979"/>
    </location>
</feature>
<feature type="short sequence motif" description="Nuclear localization signal" evidence="1">
    <location>
        <begin position="5019"/>
        <end position="5027"/>
    </location>
</feature>
<feature type="short sequence motif" description="Nuclear localization signal" evidence="1">
    <location>
        <begin position="5034"/>
        <end position="5039"/>
    </location>
</feature>
<feature type="short sequence motif" description="Nuclear localization signal" evidence="1">
    <location>
        <begin position="5706"/>
        <end position="5716"/>
    </location>
</feature>
<feature type="short sequence motif" description="Nuclear localization signal" evidence="1">
    <location>
        <begin position="5772"/>
        <end position="5779"/>
    </location>
</feature>
<feature type="compositionally biased region" description="Basic and acidic residues" evidence="3">
    <location>
        <begin position="2410"/>
        <end position="2419"/>
    </location>
</feature>
<feature type="compositionally biased region" description="Basic and acidic residues" evidence="3">
    <location>
        <begin position="2610"/>
        <end position="2619"/>
    </location>
</feature>
<feature type="compositionally biased region" description="Basic and acidic residues" evidence="3">
    <location>
        <begin position="2860"/>
        <end position="2878"/>
    </location>
</feature>
<feature type="compositionally biased region" description="Basic and acidic residues" evidence="3">
    <location>
        <begin position="3122"/>
        <end position="3131"/>
    </location>
</feature>
<feature type="compositionally biased region" description="Basic and acidic residues" evidence="3">
    <location>
        <begin position="3702"/>
        <end position="3714"/>
    </location>
</feature>
<feature type="compositionally biased region" description="Basic and acidic residues" evidence="3">
    <location>
        <begin position="3770"/>
        <end position="3785"/>
    </location>
</feature>
<feature type="compositionally biased region" description="Basic and acidic residues" evidence="3">
    <location>
        <begin position="4103"/>
        <end position="4117"/>
    </location>
</feature>
<feature type="compositionally biased region" description="Basic and acidic residues" evidence="3">
    <location>
        <begin position="4154"/>
        <end position="4169"/>
    </location>
</feature>
<feature type="compositionally biased region" description="Basic and acidic residues" evidence="3">
    <location>
        <begin position="4567"/>
        <end position="4581"/>
    </location>
</feature>
<feature type="compositionally biased region" description="Basic and acidic residues" evidence="3">
    <location>
        <begin position="4618"/>
        <end position="4631"/>
    </location>
</feature>
<feature type="compositionally biased region" description="Basic and acidic residues" evidence="3">
    <location>
        <begin position="4746"/>
        <end position="4761"/>
    </location>
</feature>
<feature type="compositionally biased region" description="Basic and acidic residues" evidence="3">
    <location>
        <begin position="4881"/>
        <end position="4896"/>
    </location>
</feature>
<feature type="compositionally biased region" description="Low complexity" evidence="3">
    <location>
        <begin position="5854"/>
        <end position="5870"/>
    </location>
</feature>
<feature type="modified residue" description="N-acetylmethionine" evidence="17">
    <location>
        <position position="1"/>
    </location>
</feature>
<feature type="modified residue" description="Phosphoserine" evidence="7 8 10 11 15 18">
    <location>
        <position position="41"/>
    </location>
</feature>
<feature type="modified residue" description="Phosphoserine" evidence="8 10 15 16 18 20">
    <location>
        <position position="93"/>
    </location>
</feature>
<feature type="modified residue" description="Phosphothreonine" evidence="15">
    <location>
        <position position="101"/>
    </location>
</feature>
<feature type="modified residue" description="Phosphoserine" evidence="20">
    <location>
        <position position="115"/>
    </location>
</feature>
<feature type="modified residue" description="Phosphoserine" evidence="15 16 18 20">
    <location>
        <position position="135"/>
    </location>
</feature>
<feature type="modified residue" description="Phosphothreonine" evidence="18">
    <location>
        <position position="158"/>
    </location>
</feature>
<feature type="modified residue" description="Phosphoserine" evidence="15 16 18">
    <location>
        <position position="177"/>
    </location>
</feature>
<feature type="modified residue" description="Phosphoserine" evidence="15 18 20">
    <location>
        <position position="210"/>
    </location>
</feature>
<feature type="modified residue" description="Phosphoserine" evidence="15 18 20">
    <location>
        <position position="212"/>
    </location>
</feature>
<feature type="modified residue" description="Phosphoserine" evidence="15 18">
    <location>
        <position position="216"/>
    </location>
</feature>
<feature type="modified residue" description="Phosphothreonine" evidence="20">
    <location>
        <position position="218"/>
    </location>
</feature>
<feature type="modified residue" description="Phosphoserine" evidence="18">
    <location>
        <position position="220"/>
    </location>
</feature>
<feature type="modified residue" description="Phosphoserine" evidence="20">
    <location>
        <position position="256"/>
    </location>
</feature>
<feature type="modified residue" description="Omega-N-methylarginine" evidence="19">
    <location>
        <position position="270"/>
    </location>
</feature>
<feature type="modified residue" description="Phosphoserine" evidence="18">
    <location>
        <position position="332"/>
    </location>
</feature>
<feature type="modified residue" description="Phosphoserine" evidence="18 20">
    <location>
        <position position="337"/>
    </location>
</feature>
<feature type="modified residue" description="Phosphoserine" evidence="18 20">
    <location>
        <position position="379"/>
    </location>
</feature>
<feature type="modified residue" description="Phosphoserine" evidence="20">
    <location>
        <position position="470"/>
    </location>
</feature>
<feature type="modified residue" description="Phosphothreonine" evidence="8 9 15 16 18 20">
    <location>
        <position position="490"/>
    </location>
</feature>
<feature type="modified residue" description="Phosphoserine" evidence="7 8 9 10 11 13 14 15 16 18 20">
    <location>
        <position position="511"/>
    </location>
</feature>
<feature type="modified residue" description="Phosphothreonine" evidence="18">
    <location>
        <position position="551"/>
    </location>
</feature>
<feature type="modified residue" description="Phosphothreonine" evidence="18">
    <location>
        <position position="553"/>
    </location>
</feature>
<feature type="modified residue" description="Phosphoserine" evidence="15 16">
    <location>
        <position position="559"/>
    </location>
</feature>
<feature type="modified residue" description="Phosphoserine" evidence="10 14 15 18 20">
    <location>
        <position position="570"/>
    </location>
</feature>
<feature type="modified residue" description="Phosphoserine" evidence="18">
    <location>
        <position position="572"/>
    </location>
</feature>
<feature type="modified residue" description="Phosphoserine" evidence="18">
    <location>
        <position position="658"/>
    </location>
</feature>
<feature type="modified residue" description="Phosphoserine" evidence="10 15 18">
    <location>
        <position position="793"/>
    </location>
</feature>
<feature type="modified residue" description="Phosphoserine" evidence="18">
    <location>
        <position position="819"/>
    </location>
</feature>
<feature type="modified residue" description="Phosphoserine" evidence="20">
    <location>
        <position position="1010"/>
    </location>
</feature>
<feature type="modified residue" description="Phosphoserine" evidence="20">
    <location>
        <position position="1042"/>
    </location>
</feature>
<feature type="modified residue" description="Phosphoserine" evidence="15 18 20">
    <location>
        <position position="1068"/>
    </location>
</feature>
<feature type="modified residue" description="Phosphoserine" evidence="20">
    <location>
        <position position="1170"/>
    </location>
</feature>
<feature type="modified residue" description="Phosphothreonine" evidence="15">
    <location>
        <position position="1192"/>
    </location>
</feature>
<feature type="modified residue" description="Phosphoserine" evidence="18">
    <location>
        <position position="1196"/>
    </location>
</feature>
<feature type="modified residue" description="N6-methyllysine" evidence="19">
    <location>
        <position position="1208"/>
    </location>
</feature>
<feature type="modified residue" description="Phosphoserine" evidence="15 18">
    <location>
        <position position="1286"/>
    </location>
</feature>
<feature type="modified residue" description="Phosphoserine" evidence="18">
    <location>
        <position position="1298"/>
    </location>
</feature>
<feature type="modified residue" description="Phosphoserine" evidence="20">
    <location>
        <position position="1580"/>
    </location>
</feature>
<feature type="modified residue" description="Phosphoserine" evidence="18">
    <location>
        <position position="1654"/>
    </location>
</feature>
<feature type="modified residue" description="N6-methyllysine" evidence="19">
    <location>
        <position position="1666"/>
    </location>
</feature>
<feature type="modified residue" description="Phosphoserine" evidence="18">
    <location>
        <position position="1856"/>
    </location>
</feature>
<feature type="modified residue" description="N6-methyllysine" evidence="19">
    <location>
        <position position="1868"/>
    </location>
</feature>
<feature type="modified residue" description="Phosphoserine" evidence="18">
    <location>
        <position position="1923"/>
    </location>
</feature>
<feature type="modified residue" description="N6-methyllysine" evidence="19">
    <location>
        <position position="1935"/>
    </location>
</feature>
<feature type="modified residue" description="Phosphothreonine" evidence="15">
    <location>
        <position position="1986"/>
    </location>
</feature>
<feature type="modified residue" description="Phosphoserine" evidence="18">
    <location>
        <position position="1990"/>
    </location>
</feature>
<feature type="modified residue" description="N6-methyllysine" evidence="19">
    <location>
        <position position="2002"/>
    </location>
</feature>
<feature type="modified residue" description="Phosphoserine" evidence="18">
    <location>
        <position position="2092"/>
    </location>
</feature>
<feature type="modified residue" description="Phosphoserine" evidence="18">
    <location>
        <position position="2118"/>
    </location>
</feature>
<feature type="modified residue" description="N6-methyllysine" evidence="19">
    <location>
        <position position="2130"/>
    </location>
</feature>
<feature type="modified residue" description="Phosphoserine" evidence="20">
    <location>
        <position position="2138"/>
    </location>
</feature>
<feature type="modified residue" description="Phosphothreonine" evidence="15">
    <location>
        <position position="2181"/>
    </location>
</feature>
<feature type="modified residue" description="Phosphoserine" evidence="18">
    <location>
        <position position="2287"/>
    </location>
</feature>
<feature type="modified residue" description="Phosphothreonine" evidence="15">
    <location>
        <position position="2309"/>
    </location>
</feature>
<feature type="modified residue" description="Phosphoserine" evidence="14 15 18">
    <location>
        <position position="2397"/>
    </location>
</feature>
<feature type="modified residue" description="Phosphoserine" evidence="18">
    <location>
        <position position="2580"/>
    </location>
</feature>
<feature type="modified residue" description="Phosphoserine" evidence="20">
    <location>
        <position position="2600"/>
    </location>
</feature>
<feature type="modified residue" description="Phosphoserine" evidence="15 18">
    <location>
        <position position="2670"/>
    </location>
</feature>
<feature type="modified residue" description="Phosphoserine" evidence="20">
    <location>
        <position position="2708"/>
    </location>
</feature>
<feature type="modified residue" description="Phosphoserine" evidence="20">
    <location>
        <position position="2728"/>
    </location>
</feature>
<feature type="modified residue" description="Phosphoserine" evidence="15 18">
    <location>
        <position position="2798"/>
    </location>
</feature>
<feature type="modified residue" description="Phosphothreonine" evidence="15">
    <location>
        <position position="2832"/>
    </location>
</feature>
<feature type="modified residue" description="Phosphothreonine" evidence="15 18">
    <location>
        <position position="2845"/>
    </location>
</feature>
<feature type="modified residue" description="Phosphoserine" evidence="15 18">
    <location>
        <position position="3054"/>
    </location>
</feature>
<feature type="modified residue" description="Phosphoserine" evidence="20">
    <location>
        <position position="3092"/>
    </location>
</feature>
<feature type="modified residue" description="Phosphoserine" evidence="15 18">
    <location>
        <position position="3182"/>
    </location>
</feature>
<feature type="modified residue" description="Phosphoserine" evidence="20">
    <location>
        <position position="3220"/>
    </location>
</feature>
<feature type="modified residue" description="Phosphoserine" evidence="18">
    <location>
        <position position="3362"/>
    </location>
</feature>
<feature type="modified residue" description="Phosphoserine" evidence="15">
    <location>
        <position position="3409"/>
    </location>
</feature>
<feature type="modified residue" description="Phosphoserine" evidence="15 18 20">
    <location>
        <position position="3412"/>
    </location>
</feature>
<feature type="modified residue" description="Phosphoserine" evidence="15 18">
    <location>
        <position position="3426"/>
    </location>
</feature>
<feature type="modified residue" description="Phosphoserine" evidence="20">
    <location>
        <position position="3544"/>
    </location>
</feature>
<feature type="modified residue" description="Phosphothreonine" evidence="15 18">
    <location>
        <position position="3716"/>
    </location>
</feature>
<feature type="modified residue" description="Phosphoserine" evidence="20">
    <location>
        <position position="3746"/>
    </location>
</feature>
<feature type="modified residue" description="Phosphoserine" evidence="20">
    <location>
        <position position="3766"/>
    </location>
</feature>
<feature type="modified residue" description="Phosphoserine" evidence="15 18">
    <location>
        <position position="3836"/>
    </location>
</feature>
<feature type="modified residue" description="Phosphoserine" evidence="20">
    <location>
        <position position="3874"/>
    </location>
</feature>
<feature type="modified residue" description="Phosphoserine" evidence="15 18">
    <location>
        <position position="3964"/>
    </location>
</feature>
<feature type="modified residue" description="Phosphoserine" evidence="18">
    <location>
        <position position="4002"/>
    </location>
</feature>
<feature type="modified residue" description="Phosphoserine" evidence="20">
    <location>
        <position position="4022"/>
    </location>
</feature>
<feature type="modified residue" description="Phosphoserine" evidence="15 18">
    <location>
        <position position="4092"/>
    </location>
</feature>
<feature type="modified residue" description="Phosphothreonine" evidence="8 15 18 20">
    <location>
        <position position="4100"/>
    </location>
</feature>
<feature type="modified residue" description="Phosphoserine" evidence="20">
    <location>
        <position position="4150"/>
    </location>
</feature>
<feature type="modified residue" description="Phosphoserine" evidence="15 18">
    <location>
        <position position="4220"/>
    </location>
</feature>
<feature type="modified residue" description="Phosphoserine" evidence="18">
    <location>
        <position position="4258"/>
    </location>
</feature>
<feature type="modified residue" description="Phosphoserine" evidence="20">
    <location>
        <position position="4278"/>
    </location>
</feature>
<feature type="modified residue" description="Phosphoserine" evidence="18">
    <location>
        <position position="4360"/>
    </location>
</feature>
<feature type="modified residue" description="Phosphoserine" evidence="20">
    <location>
        <position position="4406"/>
    </location>
</feature>
<feature type="modified residue" description="Phosphoserine" evidence="20">
    <location>
        <position position="4425"/>
    </location>
</feature>
<feature type="modified residue" description="Phosphothreonine" evidence="15 18">
    <location>
        <position position="4430"/>
    </location>
</feature>
<feature type="modified residue" description="Phosphoserine" evidence="18">
    <location>
        <position position="4460"/>
    </location>
</feature>
<feature type="modified residue" description="Phosphoserine" evidence="20">
    <location>
        <position position="4480"/>
    </location>
</feature>
<feature type="modified residue" description="Phosphoserine" evidence="20">
    <location>
        <position position="4486"/>
    </location>
</feature>
<feature type="modified residue" description="Phosphoserine" evidence="15">
    <location>
        <position position="4516"/>
    </location>
</feature>
<feature type="modified residue" description="Phosphoserine" evidence="18">
    <location>
        <position position="4520"/>
    </location>
</feature>
<feature type="modified residue" description="Phosphothreonine" evidence="18 20">
    <location>
        <position position="4564"/>
    </location>
</feature>
<feature type="modified residue" description="Phosphoserine" evidence="15 18">
    <location>
        <position position="4684"/>
    </location>
</feature>
<feature type="modified residue" description="Phosphoserine" evidence="20">
    <location>
        <position position="4722"/>
    </location>
</feature>
<feature type="modified residue" description="Phosphothreonine" evidence="8 18">
    <location>
        <position position="4766"/>
    </location>
</feature>
<feature type="modified residue" description="Phosphoserine" evidence="15 18">
    <location>
        <position position="4812"/>
    </location>
</feature>
<feature type="modified residue" description="Phosphoserine" evidence="18">
    <location>
        <position position="4900"/>
    </location>
</feature>
<feature type="modified residue" description="Phosphoserine" evidence="10">
    <location>
        <position position="4903"/>
    </location>
</feature>
<feature type="modified residue" description="Phosphoserine" evidence="18">
    <location>
        <position position="4908"/>
    </location>
</feature>
<feature type="modified residue" description="Phosphoserine" evidence="18">
    <location>
        <position position="4953"/>
    </location>
</feature>
<feature type="modified residue" description="Phosphoserine" evidence="10 15 20">
    <location>
        <position position="4960"/>
    </location>
</feature>
<feature type="modified residue" description="Phosphoserine" evidence="9 15 18">
    <location>
        <position position="4986"/>
    </location>
</feature>
<feature type="modified residue" description="Phosphoserine" evidence="10">
    <location>
        <position position="4993"/>
    </location>
</feature>
<feature type="modified residue" description="Phosphothreonine" evidence="10">
    <location>
        <position position="5009"/>
    </location>
</feature>
<feature type="modified residue" description="Phosphoserine" evidence="8 15">
    <location>
        <position position="5077"/>
    </location>
</feature>
<feature type="modified residue" description="Phosphoserine" evidence="9 10 15 18 20">
    <location>
        <position position="5099"/>
    </location>
</feature>
<feature type="modified residue" description="Phosphoserine" evidence="8 9 15 18 20">
    <location>
        <position position="5110"/>
    </location>
</feature>
<feature type="modified residue" description="Phosphoserine" evidence="15">
    <location>
        <position position="5125"/>
    </location>
</feature>
<feature type="modified residue" description="Phosphoserine" evidence="20">
    <location>
        <position position="5261"/>
    </location>
</feature>
<feature type="modified residue" description="Phosphoserine" evidence="18">
    <location>
        <position position="5318"/>
    </location>
</feature>
<feature type="modified residue" description="Phosphoserine" evidence="15 18">
    <location>
        <position position="5332"/>
    </location>
</feature>
<feature type="modified residue" description="Phosphoserine" evidence="18">
    <location>
        <position position="5369"/>
    </location>
</feature>
<feature type="modified residue" description="Phosphoserine" evidence="15">
    <location>
        <position position="5386"/>
    </location>
</feature>
<feature type="modified residue" description="Phosphoserine" evidence="18">
    <location>
        <position position="5393"/>
    </location>
</feature>
<feature type="modified residue" description="Phosphoserine" evidence="15 18 20">
    <location>
        <position position="5400"/>
    </location>
</feature>
<feature type="modified residue" description="Phosphothreonine" evidence="10">
    <location>
        <position position="5415"/>
    </location>
</feature>
<feature type="modified residue" description="Phosphoserine" evidence="8 14 15 18 20">
    <location>
        <position position="5448"/>
    </location>
</feature>
<feature type="modified residue" description="Phosphoserine" evidence="18">
    <location>
        <position position="5519"/>
    </location>
</feature>
<feature type="modified residue" description="Phosphoserine" evidence="18">
    <location>
        <position position="5530"/>
    </location>
</feature>
<feature type="modified residue" description="Phosphoserine" evidence="8 9 15 18">
    <location>
        <position position="5552"/>
    </location>
</feature>
<feature type="modified residue" description="Phosphoserine" evidence="20">
    <location>
        <position position="5577"/>
    </location>
</feature>
<feature type="modified residue" description="Phosphoserine" evidence="15 18 20">
    <location>
        <position position="5620"/>
    </location>
</feature>
<feature type="modified residue" description="Phosphoserine" evidence="18 20">
    <location>
        <position position="5641"/>
    </location>
</feature>
<feature type="modified residue" description="Phosphoserine" evidence="7 10 14 15 16 18 20">
    <location>
        <position position="5731"/>
    </location>
</feature>
<feature type="modified residue" description="Phosphoserine" evidence="15 18 20">
    <location>
        <position position="5739"/>
    </location>
</feature>
<feature type="modified residue" description="Phosphoserine" evidence="10 12 14 18 20">
    <location>
        <position position="5749"/>
    </location>
</feature>
<feature type="modified residue" description="Phosphoserine" evidence="8 10 12 13 14 15 18 20">
    <location>
        <position position="5752"/>
    </location>
</feature>
<feature type="modified residue" description="Phosphoserine" evidence="18">
    <location>
        <position position="5762"/>
    </location>
</feature>
<feature type="modified residue" description="Phosphoserine" evidence="7 10 14 15 18">
    <location>
        <position position="5763"/>
    </location>
</feature>
<feature type="modified residue" description="Phosphoserine" evidence="10 15 20">
    <location>
        <position position="5780"/>
    </location>
</feature>
<feature type="modified residue" description="Phosphoserine" evidence="10 15 20">
    <location>
        <position position="5782"/>
    </location>
</feature>
<feature type="modified residue" description="Phosphoserine" evidence="15">
    <location>
        <position position="5790"/>
    </location>
</feature>
<feature type="modified residue" description="Phosphoserine" evidence="10">
    <location>
        <position position="5793"/>
    </location>
</feature>
<feature type="modified residue" description="Phosphothreonine" evidence="10">
    <location>
        <position position="5794"/>
    </location>
</feature>
<feature type="modified residue" description="Phosphothreonine" evidence="15 18">
    <location>
        <position position="5824"/>
    </location>
</feature>
<feature type="modified residue" description="Phosphoserine" evidence="10 15 18 20">
    <location>
        <position position="5830"/>
    </location>
</feature>
<feature type="modified residue" description="Phosphoserine" evidence="10 15 16 18 20">
    <location>
        <position position="5841"/>
    </location>
</feature>
<feature type="modified residue" description="Phosphothreonine" evidence="18">
    <location>
        <position position="5845"/>
    </location>
</feature>
<feature type="modified residue" description="Phosphoserine" evidence="20">
    <location>
        <position position="5851"/>
    </location>
</feature>
<feature type="modified residue" description="Phosphoserine" evidence="15 18 20">
    <location>
        <position position="5857"/>
    </location>
</feature>
<feature type="modified residue" description="Phosphoserine" evidence="20">
    <location>
        <position position="5863"/>
    </location>
</feature>
<feature type="cross-link" description="Glycyl lysine isopeptide (Lys-Gly) (interchain with G-Cter in SUMO1); alternate" evidence="21">
    <location>
        <position position="134"/>
    </location>
</feature>
<feature type="cross-link" description="Glycyl lysine isopeptide (Lys-Gly) (interchain with G-Cter in SUMO2); alternate" evidence="22">
    <location>
        <position position="134"/>
    </location>
</feature>
<feature type="cross-link" description="Glycyl lysine isopeptide (Lys-Gly) (interchain with G-Cter in SUMO2)" evidence="24">
    <location>
        <position position="181"/>
    </location>
</feature>
<feature type="cross-link" description="Glycyl lysine isopeptide (Lys-Gly) (interchain with G-Cter in SUMO2)" evidence="23 24">
    <location>
        <position position="712"/>
    </location>
</feature>
<feature type="cross-link" description="Glycyl lysine isopeptide (Lys-Gly) (interchain with G-Cter in SUMO2)" evidence="24">
    <location>
        <position position="763"/>
    </location>
</feature>
<feature type="cross-link" description="Glycyl lysine isopeptide (Lys-Gly) (interchain with G-Cter in SUMO2)" evidence="24">
    <location>
        <position position="891"/>
    </location>
</feature>
<feature type="cross-link" description="Glycyl lysine isopeptide (Lys-Gly) (interchain with G-Cter in SUMO1)" evidence="21">
    <location>
        <position position="942"/>
    </location>
</feature>
<feature type="cross-link" description="Glycyl lysine isopeptide (Lys-Gly) (interchain with G-Cter in SUMO1); alternate" evidence="21">
    <location>
        <position position="961"/>
    </location>
</feature>
<feature type="cross-link" description="Glycyl lysine isopeptide (Lys-Gly) (interchain with G-Cter in SUMO2); alternate" evidence="23">
    <location>
        <position position="961"/>
    </location>
</feature>
<feature type="cross-link" description="Glycyl lysine isopeptide (Lys-Gly) (interchain with G-Cter in SUMO2)" evidence="24">
    <location>
        <position position="1726"/>
    </location>
</feature>
<feature type="cross-link" description="Glycyl lysine isopeptide (Lys-Gly) (interchain with G-Cter in SUMO2)" evidence="24">
    <location>
        <position position="2062"/>
    </location>
</feature>
<feature type="cross-link" description="Glycyl lysine isopeptide (Lys-Gly) (interchain with G-Cter in SUMO1)" evidence="21">
    <location>
        <position position="2132"/>
    </location>
</feature>
<feature type="cross-link" description="Glycyl lysine isopeptide (Lys-Gly) (interchain with G-Cter in SUMO2)" evidence="24">
    <location>
        <position position="2524"/>
    </location>
</feature>
<feature type="cross-link" description="Glycyl lysine isopeptide (Lys-Gly) (interchain with G-Cter in SUMO1)" evidence="21">
    <location>
        <position position="2575"/>
    </location>
</feature>
<feature type="cross-link" description="Glycyl lysine isopeptide (Lys-Gly) (interchain with G-Cter in SUMO1)" evidence="21">
    <location>
        <position position="2594"/>
    </location>
</feature>
<feature type="cross-link" description="Glycyl lysine isopeptide (Lys-Gly) (interchain with G-Cter in SUMO1)" evidence="21">
    <location>
        <position position="2703"/>
    </location>
</feature>
<feature type="cross-link" description="Glycyl lysine isopeptide (Lys-Gly) (interchain with G-Cter in SUMO1)" evidence="21">
    <location>
        <position position="2722"/>
    </location>
</feature>
<feature type="cross-link" description="Glycyl lysine isopeptide (Lys-Gly) (interchain with G-Cter in SUMO2)" evidence="24">
    <location>
        <position position="2908"/>
    </location>
</feature>
<feature type="cross-link" description="Glycyl lysine isopeptide (Lys-Gly) (interchain with G-Cter in SUMO1)" evidence="21">
    <location>
        <position position="2959"/>
    </location>
</feature>
<feature type="cross-link" description="Glycyl lysine isopeptide (Lys-Gly) (interchain with G-Cter in SUMO1)" evidence="21">
    <location>
        <position position="3087"/>
    </location>
</feature>
<feature type="cross-link" description="Glycyl lysine isopeptide (Lys-Gly) (interchain with G-Cter in SUMO1)" evidence="21">
    <location>
        <position position="3215"/>
    </location>
</feature>
<feature type="cross-link" description="Glycyl lysine isopeptide (Lys-Gly) (interchain with G-Cter in SUMO1)" evidence="21">
    <location>
        <position position="3667"/>
    </location>
</feature>
<feature type="cross-link" description="Glycyl lysine isopeptide (Lys-Gly) (interchain with G-Cter in SUMO1)" evidence="21">
    <location>
        <position position="3760"/>
    </location>
</feature>
<feature type="cross-link" description="Glycyl lysine isopeptide (Lys-Gly) (interchain with G-Cter in SUMO1)" evidence="21">
    <location>
        <position position="3869"/>
    </location>
</feature>
<feature type="cross-link" description="Glycyl lysine isopeptide (Lys-Gly) (interchain with G-Cter in SUMO1)" evidence="21">
    <location>
        <position position="3997"/>
    </location>
</feature>
<feature type="cross-link" description="Glycyl lysine isopeptide (Lys-Gly) (interchain with G-Cter in SUMO1)" evidence="21">
    <location>
        <position position="4016"/>
    </location>
</feature>
<feature type="cross-link" description="Glycyl lysine isopeptide (Lys-Gly) (interchain with G-Cter in SUMO1)" evidence="21">
    <location>
        <position position="4253"/>
    </location>
</feature>
<feature type="cross-link" description="Glycyl lysine isopeptide (Lys-Gly) (interchain with G-Cter in SUMO1)" evidence="21">
    <location>
        <position position="4272"/>
    </location>
</feature>
<feature type="cross-link" description="Glycyl lysine isopeptide (Lys-Gly) (interchain with G-Cter in SUMO1)" evidence="21">
    <location>
        <position position="4381"/>
    </location>
</feature>
<feature type="cross-link" description="Glycyl lysine isopeptide (Lys-Gly) (interchain with G-Cter in SUMO1)" evidence="21">
    <location>
        <position position="4400"/>
    </location>
</feature>
<feature type="cross-link" description="Glycyl lysine isopeptide (Lys-Gly) (interchain with G-Cter in SUMO1)" evidence="21">
    <location>
        <position position="4455"/>
    </location>
</feature>
<feature type="cross-link" description="Glycyl lysine isopeptide (Lys-Gly) (interchain with G-Cter in SUMO1)" evidence="21">
    <location>
        <position position="4474"/>
    </location>
</feature>
<feature type="cross-link" description="Glycyl lysine isopeptide (Lys-Gly) (interchain with G-Cter in SUMO2)" evidence="24">
    <location>
        <position position="5623"/>
    </location>
</feature>
<feature type="splice variant" id="VSP_044233" description="In isoform 2." evidence="5">
    <original>SGDDEEYQRIYTTKIKPRLKSEDGVEGDLGETQSR</original>
    <variation>NTPQPSALECKDQNKQKEASSQAGAVSVSTPNAGL</variation>
    <location>
        <begin position="115"/>
        <end position="149"/>
    </location>
</feature>
<feature type="splice variant" id="VSP_044234" description="In isoform 2." evidence="5">
    <location>
        <begin position="150"/>
        <end position="5890"/>
    </location>
</feature>
<feature type="sequence variant" id="VAR_039058" description="In dbSNP:rs664761.">
    <original>G</original>
    <variation>V</variation>
    <location>
        <position position="962"/>
    </location>
</feature>
<feature type="sequence variant" id="VAR_039059" description="In dbSNP:rs1298288.">
    <original>A</original>
    <variation>T</variation>
    <location>
        <position position="2114"/>
    </location>
</feature>
<feature type="sequence variant" id="VAR_061551" description="In dbSNP:rs61524789.">
    <original>K</original>
    <variation>T</variation>
    <location>
        <position position="2247"/>
    </location>
</feature>
<feature type="sequence variant" id="VAR_039060" description="In dbSNP:rs11824660.">
    <original>P</original>
    <variation>L</variation>
    <location>
        <position position="2439"/>
    </location>
</feature>
<feature type="sequence variant" id="VAR_039061" description="In dbSNP:rs566144.">
    <original>Q</original>
    <variation>K</variation>
    <location>
        <position position="3003"/>
    </location>
</feature>
<feature type="sequence variant" id="VAR_039062" description="In dbSNP:rs11231129.">
    <original>V</original>
    <variation>I</variation>
    <location>
        <position position="3190"/>
    </location>
</feature>
<feature type="sequence variant" id="VAR_039063" description="In dbSNP:rs11231128.">
    <original>S</original>
    <variation>P</variation>
    <location>
        <position position="3724"/>
    </location>
</feature>
<feature type="sequence variant" id="VAR_061552" description="In dbSNP:rs11828907.">
    <original>D</original>
    <variation>G</variation>
    <location>
        <position position="4304"/>
    </location>
</feature>
<feature type="sequence variant" id="VAR_039064" description="In dbSNP:rs12795508.">
    <original>G</original>
    <variation>D</variation>
    <location>
        <position position="4561"/>
    </location>
</feature>
<feature type="sequence variant" id="VAR_039065" description="In dbSNP:rs12801302.">
    <original>M</original>
    <variation>V</variation>
    <location>
        <position position="4611"/>
    </location>
</feature>
<feature type="sequence variant" id="VAR_039066" description="In dbSNP:rs12801153.">
    <original>I</original>
    <variation>V</variation>
    <location>
        <position position="4613"/>
    </location>
</feature>
<feature type="sequence variant" id="VAR_039067" description="In dbSNP:rs12801123.">
    <original>D</original>
    <variation>G</variation>
    <location>
        <position position="4631"/>
    </location>
</feature>
<feature type="sequence variant" id="VAR_039068" description="In dbSNP:rs11231126.">
    <original>T</original>
    <variation>A</variation>
    <location>
        <position position="5415"/>
    </location>
</feature>
<feature type="sequence conflict" description="In Ref. 4; AAA69899." evidence="6" ref="4">
    <original>A</original>
    <variation>P</variation>
    <location>
        <position position="288"/>
    </location>
</feature>
<feature type="sequence conflict" description="In Ref. 4; AAA69899." evidence="6" ref="4">
    <original>G</original>
    <variation>A</variation>
    <location>
        <position position="302"/>
    </location>
</feature>
<feature type="sequence conflict" description="In Ref. 4; AAA69899." evidence="6" ref="4">
    <original>V</original>
    <variation>D</variation>
    <location>
        <position position="1156"/>
    </location>
</feature>
<feature type="sequence conflict" description="In Ref. 4; AAA69899." evidence="6" ref="4">
    <original>P</original>
    <variation>R</variation>
    <location>
        <position position="1737"/>
    </location>
</feature>
<feature type="sequence conflict" description="In Ref. 4; AAA69899." evidence="6" ref="4">
    <original>F</original>
    <variation>L</variation>
    <location>
        <position position="1821"/>
    </location>
</feature>
<feature type="sequence conflict" description="In Ref. 4; AAA69898." evidence="6" ref="4">
    <original>S</original>
    <variation>T</variation>
    <location>
        <position position="4614"/>
    </location>
</feature>
<feature type="sequence conflict" description="In Ref. 4; AAA69898." evidence="6" ref="4">
    <original>V</original>
    <variation>A</variation>
    <location>
        <position position="4627"/>
    </location>
</feature>
<feature type="sequence conflict" description="In Ref. 4; AAA69898." evidence="6" ref="4">
    <original>RD</original>
    <variation>KG</variation>
    <location>
        <begin position="4630"/>
        <end position="4631"/>
    </location>
</feature>
<feature type="sequence conflict" description="In Ref. 4; AAA69898." evidence="6" ref="4">
    <original>DV</original>
    <variation>NT</variation>
    <location>
        <begin position="4637"/>
        <end position="4638"/>
    </location>
</feature>
<feature type="sequence conflict" description="In Ref. 4; AAA69898." evidence="6" ref="4">
    <original>Q</original>
    <variation>H</variation>
    <location>
        <position position="4644"/>
    </location>
</feature>
<feature type="sequence conflict" description="In Ref. 4; AAA69898." evidence="6" ref="4">
    <original>A</original>
    <variation>P</variation>
    <location>
        <position position="4830"/>
    </location>
</feature>
<feature type="sequence conflict" description="In Ref. 4; AAA69898." evidence="6" ref="4">
    <original>G</original>
    <variation>V</variation>
    <location>
        <position position="4834"/>
    </location>
</feature>
<feature type="sequence conflict" description="In Ref. 4; AAA69898." evidence="6" ref="4">
    <original>F</original>
    <variation>V</variation>
    <location>
        <position position="4837"/>
    </location>
</feature>
<feature type="sequence conflict" description="In Ref. 4; AAA69898." evidence="6" ref="4">
    <original>A</original>
    <variation>P</variation>
    <location>
        <position position="4984"/>
    </location>
</feature>
<feature type="sequence conflict" description="In Ref. 4; AAA69898." evidence="6" ref="4">
    <original>P</original>
    <variation>S</variation>
    <location>
        <position position="5445"/>
    </location>
</feature>
<comment type="function">
    <text>May be required for neuronal cell differentiation.</text>
</comment>
<comment type="subunit">
    <text evidence="4">Interacts with DYSF; the interaction is direct and Ca(2+)-independent.</text>
</comment>
<comment type="interaction">
    <interactant intactId="EBI-2555881">
        <id>Q09666</id>
    </interactant>
    <interactant intactId="EBI-297353">
        <id>P00533</id>
        <label>EGFR</label>
    </interactant>
    <organismsDiffer>false</organismsDiffer>
    <experiments>4</experiments>
</comment>
<comment type="interaction">
    <interactant intactId="EBI-2555881">
        <id>Q09666</id>
    </interactant>
    <interactant intactId="EBI-717048">
        <id>P60903</id>
        <label>S100A10</label>
    </interactant>
    <organismsDiffer>false</organismsDiffer>
    <experiments>2</experiments>
</comment>
<comment type="interaction">
    <interactant intactId="EBI-10245106">
        <id>Q09666-2</id>
    </interactant>
    <interactant intactId="EBI-1055462">
        <id>Q5SY16</id>
        <label>NOL9</label>
    </interactant>
    <organismsDiffer>false</organismsDiffer>
    <experiments>3</experiments>
</comment>
<comment type="subcellular location">
    <subcellularLocation>
        <location>Nucleus</location>
    </subcellularLocation>
</comment>
<comment type="alternative products">
    <event type="alternative splicing"/>
    <isoform>
        <id>Q09666-1</id>
        <name>1</name>
        <sequence type="displayed"/>
    </isoform>
    <isoform>
        <id>Q09666-2</id>
        <name>2</name>
        <sequence type="described" ref="VSP_044233 VSP_044234"/>
    </isoform>
</comment>
<comment type="sequence caution" evidence="6">
    <conflict type="erroneous initiation">
        <sequence resource="EMBL-CDS" id="AAA69899"/>
    </conflict>
    <text>Truncated N-terminus.</text>
</comment>
<organism>
    <name type="scientific">Homo sapiens</name>
    <name type="common">Human</name>
    <dbReference type="NCBI Taxonomy" id="9606"/>
    <lineage>
        <taxon>Eukaryota</taxon>
        <taxon>Metazoa</taxon>
        <taxon>Chordata</taxon>
        <taxon>Craniata</taxon>
        <taxon>Vertebrata</taxon>
        <taxon>Euteleostomi</taxon>
        <taxon>Mammalia</taxon>
        <taxon>Eutheria</taxon>
        <taxon>Euarchontoglires</taxon>
        <taxon>Primates</taxon>
        <taxon>Haplorrhini</taxon>
        <taxon>Catarrhini</taxon>
        <taxon>Hominidae</taxon>
        <taxon>Homo</taxon>
    </lineage>
</organism>
<name>AHNK_HUMAN</name>
<dbReference type="EMBL" id="AP001363">
    <property type="status" value="NOT_ANNOTATED_CDS"/>
    <property type="molecule type" value="Genomic_DNA"/>
</dbReference>
<dbReference type="EMBL" id="AP003064">
    <property type="status" value="NOT_ANNOTATED_CDS"/>
    <property type="molecule type" value="Genomic_DNA"/>
</dbReference>
<dbReference type="EMBL" id="CH471076">
    <property type="protein sequence ID" value="EAW74019.1"/>
    <property type="molecule type" value="Genomic_DNA"/>
</dbReference>
<dbReference type="EMBL" id="BC128460">
    <property type="protein sequence ID" value="AAI28461.1"/>
    <property type="molecule type" value="mRNA"/>
</dbReference>
<dbReference type="EMBL" id="M80899">
    <property type="protein sequence ID" value="AAA69898.1"/>
    <property type="molecule type" value="mRNA"/>
</dbReference>
<dbReference type="EMBL" id="M80902">
    <property type="protein sequence ID" value="AAA69899.1"/>
    <property type="status" value="ALT_INIT"/>
    <property type="molecule type" value="mRNA"/>
</dbReference>
<dbReference type="CCDS" id="CCDS31584.1">
    <molecule id="Q09666-1"/>
</dbReference>
<dbReference type="CCDS" id="CCDS44625.1">
    <molecule id="Q09666-2"/>
</dbReference>
<dbReference type="PIR" id="A45259">
    <property type="entry name" value="A45259"/>
</dbReference>
<dbReference type="RefSeq" id="NP_001333374.1">
    <molecule id="Q09666-1"/>
    <property type="nucleotide sequence ID" value="NM_001346445.2"/>
</dbReference>
<dbReference type="RefSeq" id="NP_001333375.1">
    <molecule id="Q09666-1"/>
    <property type="nucleotide sequence ID" value="NM_001346446.2"/>
</dbReference>
<dbReference type="RefSeq" id="NP_001611.1">
    <molecule id="Q09666-1"/>
    <property type="nucleotide sequence ID" value="NM_001620.3"/>
</dbReference>
<dbReference type="RefSeq" id="NP_076965.2">
    <molecule id="Q09666-2"/>
    <property type="nucleotide sequence ID" value="NM_024060.4"/>
</dbReference>
<dbReference type="RefSeq" id="XP_047283529.1">
    <molecule id="Q09666-1"/>
    <property type="nucleotide sequence ID" value="XM_047427573.1"/>
</dbReference>
<dbReference type="RefSeq" id="XP_047283530.1">
    <molecule id="Q09666-1"/>
    <property type="nucleotide sequence ID" value="XM_047427574.1"/>
</dbReference>
<dbReference type="RefSeq" id="XP_047283531.1">
    <molecule id="Q09666-1"/>
    <property type="nucleotide sequence ID" value="XM_047427575.1"/>
</dbReference>
<dbReference type="RefSeq" id="XP_047283532.1">
    <molecule id="Q09666-1"/>
    <property type="nucleotide sequence ID" value="XM_047427576.1"/>
</dbReference>
<dbReference type="RefSeq" id="XP_047283533.1">
    <molecule id="Q09666-1"/>
    <property type="nucleotide sequence ID" value="XM_047427577.1"/>
</dbReference>
<dbReference type="RefSeq" id="XP_054225894.1">
    <molecule id="Q09666-2"/>
    <property type="nucleotide sequence ID" value="XM_054369919.1"/>
</dbReference>
<dbReference type="RefSeq" id="XP_054225895.1">
    <molecule id="Q09666-2"/>
    <property type="nucleotide sequence ID" value="XM_054369920.1"/>
</dbReference>
<dbReference type="PDB" id="4DRW">
    <property type="method" value="X-ray"/>
    <property type="resolution" value="3.50 A"/>
    <property type="chains" value="E/F=5654-5673"/>
</dbReference>
<dbReference type="PDB" id="4FTG">
    <property type="method" value="X-ray"/>
    <property type="resolution" value="2.51 A"/>
    <property type="chains" value="E=5654-5673"/>
</dbReference>
<dbReference type="PDB" id="4HRG">
    <property type="method" value="X-ray"/>
    <property type="resolution" value="2.00 A"/>
    <property type="chains" value="C/D=5655-5668"/>
</dbReference>
<dbReference type="PDBsum" id="4DRW"/>
<dbReference type="PDBsum" id="4FTG"/>
<dbReference type="PDBsum" id="4HRG"/>
<dbReference type="SMR" id="Q09666"/>
<dbReference type="BioGRID" id="122494">
    <property type="interactions" value="351"/>
</dbReference>
<dbReference type="ComplexPortal" id="CPX-850">
    <property type="entry name" value="AHNAK - Annexin A2 - S100-A10 complex"/>
</dbReference>
<dbReference type="CORUM" id="Q09666"/>
<dbReference type="FunCoup" id="Q09666">
    <property type="interactions" value="1119"/>
</dbReference>
<dbReference type="IntAct" id="Q09666">
    <property type="interactions" value="165"/>
</dbReference>
<dbReference type="MINT" id="Q09666"/>
<dbReference type="STRING" id="9606.ENSP00000367263"/>
<dbReference type="ChEMBL" id="CHEMBL4296008"/>
<dbReference type="CarbonylDB" id="Q09666"/>
<dbReference type="GlyConnect" id="2858">
    <property type="glycosylation" value="1 O-GlcNAc glycan (1 site)"/>
</dbReference>
<dbReference type="GlyCosmos" id="Q09666">
    <property type="glycosylation" value="23 sites, 2 glycans"/>
</dbReference>
<dbReference type="GlyGen" id="Q09666">
    <property type="glycosylation" value="104 sites, 1 N-linked glycan (1 site), 3 O-linked glycans (103 sites)"/>
</dbReference>
<dbReference type="iPTMnet" id="Q09666"/>
<dbReference type="MetOSite" id="Q09666"/>
<dbReference type="PhosphoSitePlus" id="Q09666"/>
<dbReference type="SwissPalm" id="Q09666"/>
<dbReference type="BioMuta" id="AHNAK"/>
<dbReference type="DMDM" id="160332335"/>
<dbReference type="CPTAC" id="CPTAC-457"/>
<dbReference type="CPTAC" id="CPTAC-458"/>
<dbReference type="CPTAC" id="CPTAC-958"/>
<dbReference type="jPOST" id="Q09666"/>
<dbReference type="MassIVE" id="Q09666"/>
<dbReference type="PaxDb" id="9606-ENSP00000367263"/>
<dbReference type="PeptideAtlas" id="Q09666"/>
<dbReference type="PRIDE" id="Q09666"/>
<dbReference type="ProteomicsDB" id="107"/>
<dbReference type="ProteomicsDB" id="58724">
    <molecule id="Q09666-1"/>
</dbReference>
<dbReference type="Pumba" id="Q09666"/>
<dbReference type="Antibodypedia" id="14808">
    <property type="antibodies" value="216 antibodies from 27 providers"/>
</dbReference>
<dbReference type="DNASU" id="79026"/>
<dbReference type="Ensembl" id="ENST00000257247.11">
    <molecule id="Q09666-2"/>
    <property type="protein sequence ID" value="ENSP00000257247.7"/>
    <property type="gene ID" value="ENSG00000124942.14"/>
</dbReference>
<dbReference type="Ensembl" id="ENST00000378024.9">
    <molecule id="Q09666-1"/>
    <property type="protein sequence ID" value="ENSP00000367263.4"/>
    <property type="gene ID" value="ENSG00000124942.14"/>
</dbReference>
<dbReference type="GeneID" id="79026"/>
<dbReference type="KEGG" id="hsa:79026"/>
<dbReference type="MANE-Select" id="ENST00000378024.9">
    <property type="protein sequence ID" value="ENSP00000367263.4"/>
    <property type="RefSeq nucleotide sequence ID" value="NM_001620.3"/>
    <property type="RefSeq protein sequence ID" value="NP_001611.1"/>
</dbReference>
<dbReference type="UCSC" id="uc001ntk.3">
    <molecule id="Q09666-1"/>
    <property type="organism name" value="human"/>
</dbReference>
<dbReference type="AGR" id="HGNC:347"/>
<dbReference type="CTD" id="79026"/>
<dbReference type="DisGeNET" id="79026"/>
<dbReference type="GeneCards" id="AHNAK"/>
<dbReference type="HGNC" id="HGNC:347">
    <property type="gene designation" value="AHNAK"/>
</dbReference>
<dbReference type="HPA" id="ENSG00000124942">
    <property type="expression patterns" value="Low tissue specificity"/>
</dbReference>
<dbReference type="MIM" id="103390">
    <property type="type" value="gene"/>
</dbReference>
<dbReference type="neXtProt" id="NX_Q09666"/>
<dbReference type="OpenTargets" id="ENSG00000124942"/>
<dbReference type="PharmGKB" id="PA24640"/>
<dbReference type="VEuPathDB" id="HostDB:ENSG00000124942"/>
<dbReference type="eggNOG" id="ENOG502QTQ3">
    <property type="taxonomic scope" value="Eukaryota"/>
</dbReference>
<dbReference type="GeneTree" id="ENSGT00940000154902"/>
<dbReference type="HOGENOM" id="CLU_223458_0_0_1"/>
<dbReference type="InParanoid" id="Q09666"/>
<dbReference type="OMA" id="HENASDH"/>
<dbReference type="OrthoDB" id="8058206at2759"/>
<dbReference type="PAN-GO" id="Q09666">
    <property type="GO annotations" value="4 GO annotations based on evolutionary models"/>
</dbReference>
<dbReference type="PhylomeDB" id="Q09666"/>
<dbReference type="TreeFam" id="TF350595"/>
<dbReference type="PathwayCommons" id="Q09666"/>
<dbReference type="SignaLink" id="Q09666"/>
<dbReference type="SIGNOR" id="Q09666"/>
<dbReference type="BioGRID-ORCS" id="79026">
    <property type="hits" value="28 hits in 1167 CRISPR screens"/>
</dbReference>
<dbReference type="CD-CODE" id="232F8A39">
    <property type="entry name" value="P-body"/>
</dbReference>
<dbReference type="CD-CODE" id="FB4E32DD">
    <property type="entry name" value="Presynaptic clusters and postsynaptic densities"/>
</dbReference>
<dbReference type="ChiTaRS" id="AHNAK">
    <property type="organism name" value="human"/>
</dbReference>
<dbReference type="EvolutionaryTrace" id="Q09666"/>
<dbReference type="GeneWiki" id="AHNAK"/>
<dbReference type="GenomeRNAi" id="79026"/>
<dbReference type="Pharos" id="Q09666">
    <property type="development level" value="Tbio"/>
</dbReference>
<dbReference type="PRO" id="PR:Q09666"/>
<dbReference type="Proteomes" id="UP000005640">
    <property type="component" value="Chromosome 11"/>
</dbReference>
<dbReference type="RNAct" id="Q09666">
    <property type="molecule type" value="protein"/>
</dbReference>
<dbReference type="Bgee" id="ENSG00000124942">
    <property type="expression patterns" value="Expressed in olfactory bulb and 210 other cell types or tissues"/>
</dbReference>
<dbReference type="ExpressionAtlas" id="Q09666">
    <property type="expression patterns" value="baseline and differential"/>
</dbReference>
<dbReference type="GO" id="GO:0015629">
    <property type="term" value="C:actin cytoskeleton"/>
    <property type="evidence" value="ECO:0000314"/>
    <property type="project" value="UniProtKB"/>
</dbReference>
<dbReference type="GO" id="GO:0044291">
    <property type="term" value="C:cell-cell contact zone"/>
    <property type="evidence" value="ECO:0000314"/>
    <property type="project" value="UniProtKB"/>
</dbReference>
<dbReference type="GO" id="GO:0043034">
    <property type="term" value="C:costamere"/>
    <property type="evidence" value="ECO:0000250"/>
    <property type="project" value="CAFA"/>
</dbReference>
<dbReference type="GO" id="GO:0005737">
    <property type="term" value="C:cytoplasm"/>
    <property type="evidence" value="ECO:0000314"/>
    <property type="project" value="UniProtKB"/>
</dbReference>
<dbReference type="GO" id="GO:0005829">
    <property type="term" value="C:cytosol"/>
    <property type="evidence" value="ECO:0000314"/>
    <property type="project" value="HPA"/>
</dbReference>
<dbReference type="GO" id="GO:0070062">
    <property type="term" value="C:extracellular exosome"/>
    <property type="evidence" value="ECO:0000314"/>
    <property type="project" value="UniProtKB"/>
</dbReference>
<dbReference type="GO" id="GO:0005925">
    <property type="term" value="C:focal adhesion"/>
    <property type="evidence" value="ECO:0007005"/>
    <property type="project" value="UniProtKB"/>
</dbReference>
<dbReference type="GO" id="GO:0005765">
    <property type="term" value="C:lysosomal membrane"/>
    <property type="evidence" value="ECO:0007005"/>
    <property type="project" value="UniProtKB"/>
</dbReference>
<dbReference type="GO" id="GO:0016020">
    <property type="term" value="C:membrane"/>
    <property type="evidence" value="ECO:0007005"/>
    <property type="project" value="UniProtKB"/>
</dbReference>
<dbReference type="GO" id="GO:0005634">
    <property type="term" value="C:nucleus"/>
    <property type="evidence" value="ECO:0000250"/>
    <property type="project" value="CAFA"/>
</dbReference>
<dbReference type="GO" id="GO:0005886">
    <property type="term" value="C:plasma membrane"/>
    <property type="evidence" value="ECO:0000314"/>
    <property type="project" value="HPA"/>
</dbReference>
<dbReference type="GO" id="GO:0098797">
    <property type="term" value="C:plasma membrane protein complex"/>
    <property type="evidence" value="ECO:0000353"/>
    <property type="project" value="ComplexPortal"/>
</dbReference>
<dbReference type="GO" id="GO:0042383">
    <property type="term" value="C:sarcolemma"/>
    <property type="evidence" value="ECO:0000314"/>
    <property type="project" value="UniProtKB"/>
</dbReference>
<dbReference type="GO" id="GO:0030315">
    <property type="term" value="C:T-tubule"/>
    <property type="evidence" value="ECO:0000303"/>
    <property type="project" value="UniProtKB"/>
</dbReference>
<dbReference type="GO" id="GO:0031982">
    <property type="term" value="C:vesicle"/>
    <property type="evidence" value="ECO:0000314"/>
    <property type="project" value="UniProtKB"/>
</dbReference>
<dbReference type="GO" id="GO:0045296">
    <property type="term" value="F:cadherin binding"/>
    <property type="evidence" value="ECO:0007005"/>
    <property type="project" value="BHF-UCL"/>
</dbReference>
<dbReference type="GO" id="GO:0042802">
    <property type="term" value="F:identical protein binding"/>
    <property type="evidence" value="ECO:0000353"/>
    <property type="project" value="UniProtKB"/>
</dbReference>
<dbReference type="GO" id="GO:0003723">
    <property type="term" value="F:RNA binding"/>
    <property type="evidence" value="ECO:0007005"/>
    <property type="project" value="UniProtKB"/>
</dbReference>
<dbReference type="GO" id="GO:0044548">
    <property type="term" value="F:S100 protein binding"/>
    <property type="evidence" value="ECO:0000353"/>
    <property type="project" value="UniProtKB"/>
</dbReference>
<dbReference type="GO" id="GO:0097493">
    <property type="term" value="F:structural molecule activity conferring elasticity"/>
    <property type="evidence" value="ECO:0000250"/>
    <property type="project" value="CAFA"/>
</dbReference>
<dbReference type="GO" id="GO:1905686">
    <property type="term" value="P:positive regulation of plasma membrane repair"/>
    <property type="evidence" value="ECO:0000303"/>
    <property type="project" value="ComplexPortal"/>
</dbReference>
<dbReference type="GO" id="GO:0043484">
    <property type="term" value="P:regulation of RNA splicing"/>
    <property type="evidence" value="ECO:0000250"/>
    <property type="project" value="UniProtKB"/>
</dbReference>
<dbReference type="GO" id="GO:1901385">
    <property type="term" value="P:regulation of voltage-gated calcium channel activity"/>
    <property type="evidence" value="ECO:0000315"/>
    <property type="project" value="UniProtKB"/>
</dbReference>
<dbReference type="FunFam" id="2.30.42.10:FF:000106">
    <property type="entry name" value="Neuroblast differentiation-associated protein AHNAK"/>
    <property type="match status" value="1"/>
</dbReference>
<dbReference type="Gene3D" id="2.30.42.10">
    <property type="match status" value="1"/>
</dbReference>
<dbReference type="InterPro" id="IPR052082">
    <property type="entry name" value="Myelin_sheath_structural"/>
</dbReference>
<dbReference type="InterPro" id="IPR001478">
    <property type="entry name" value="PDZ"/>
</dbReference>
<dbReference type="InterPro" id="IPR036034">
    <property type="entry name" value="PDZ_sf"/>
</dbReference>
<dbReference type="PANTHER" id="PTHR23348:SF41">
    <property type="entry name" value="NEUROBLAST DIFFERENTIATION-ASSOCIATED PROTEIN AHNAK"/>
    <property type="match status" value="1"/>
</dbReference>
<dbReference type="PANTHER" id="PTHR23348">
    <property type="entry name" value="PERIAXIN/AHNAK"/>
    <property type="match status" value="1"/>
</dbReference>
<dbReference type="SMART" id="SM00228">
    <property type="entry name" value="PDZ"/>
    <property type="match status" value="1"/>
</dbReference>
<dbReference type="SUPFAM" id="SSF50156">
    <property type="entry name" value="PDZ domain-like"/>
    <property type="match status" value="1"/>
</dbReference>
<dbReference type="PROSITE" id="PS50106">
    <property type="entry name" value="PDZ"/>
    <property type="match status" value="1"/>
</dbReference>
<sequence length="5890" mass="629101">MEKEETTRELLLPNWQGSGSHGLTIAQRDDGVFVQEVTQNSPAARTGVVKEGDQIVGATIYFDNLQSGEVTQLLNTMGHHTVGLKLHRKGDRSPEPGQTWTREVFSSCSSEVVLSGDDEEYQRIYTTKIKPRLKSEDGVEGDLGETQSRTITVTRRVTAYTVDVTGREGAKDIDISSPEFKIKIPRHELTEISNVDVETQSGKTVIRLPSGSGAASPTGSAVDIRAGAISASGPELQGAGHSKLQVTMPGIKVGGSGVNVNAKGLDLGGRGGVQVPAVDISSSLGGRAVEVQGPSLESGDHGKIKFPTMKVPKFGVSTGREGQTPKAGLRVSAPEVSVGHKGGKPGLTIQAPQLEVSVPSANIEGLEGKLKGPQITGPSLEGDLGLKGAKPQGHIGVDASAPQIGGSITGPSVEVQAPDIDVQGPGSKLNVPKMKVPKFSVSGAKGEETGIDVTLPTGEVTVPGVSGDVSLPEIATGGLEGKMKGTKVKTPEMIIQKPKISMQDVDLSLGSPKLKGDIKVSAPGVQGDVKGPQVALKGSRVDIETPNLEGTLTGPRLGSPSGKTGTCRISMSEVDLNVAAPKVKGGVDVTLPRVEGKVKVPEVDVRGPKVDVSAPDVEAHGPEWNLKMPKMKMPTFSTPGAKGEGPDVHMTLPKGDISISGPKVNVEAPDVNLEGLGGKLKGPDVKLPDMSVKTPKISMPDVDLHVKGTKVKGEYDVTVPKLEGELKGPKVDIDAPDVDVHGPDWHLKMPKMKMPKFSVPGFKAEGPEVDVNLPKADVDISGPKIDVTAPDVSIEEPEGKLKGPKFKMPEMNIKVPKISMPDVDLHLKGPNVKGEYDVTMPKVESEIKVPDVELKSAKMDIDVPDVEVQGPDWHLKMPKMKMPKFSMPGFKAEGPEVDVNLPKADVDISGPKVGVEVPDVNIEGPEGKLKGPKFKMPEMNIKAPKISMPDVDLHMKGPKVKGEYDMTVPKLEGDLKGPKVDVSAPDVEMQGPDWNLKMPKIKMPKFSMPSLKGEGPEFDVNLSKANVDISAPKVDTNAPDLSLEGPEGKLKGPKFKMPEMHFRAPKMSLPDVDLDLKGPKMKGNVDISAPKIEGEMQVPDVDIRGPKVDIKAPDVEGQGLDWSLKIPKMKMPKFSMPSLKGEGPEVDVNLPKADVVVSGPKVDIEAPDVSLEGPEGKLKGPKFKMPEMHFKTPKISMPDVDLHLKGPKVKGDVDVSVPKVEGEMKVPDVEIKGPKMDIDAPDVEVQGPDWHLKMPKMKMPKFSMPGFKGEGREVDVNLPKADIDVSGPKVDVEVPDVSLEGPEGKLKGPKFKMPEMHFKAPKISMPDVDLNLKGPKLKGDVDVSLPEVEGEMKVPDVDIKGPKVDISAPDVDVHGPDWHLKMPKVKMPKFSMPGFKGEGPEVDVKLPKADVDVSGPKMDAEVPDVNIEGPDAKLKGPKFKMPEMSIKPQKISIPDVGLHLKGPKMKGDYDVTVPKVEGEIKAPDVDIKGPKVDINAPDVEVHGPDWHLKMPKVKMPKFSMPGFKGEGPEVDMNLPKADLGVSGPKVDIDVPDVNLEAPEGKLKGPKFKMPSMNIQTHKISMPDVGLNLKAPKLKTDVDVSLPKVEGDLKGPEIDVKAPKMDVNVGDIDIEGPEGKLKGPKFKMPEMHFKAPKISMPDVDLHLKGPKVKGDMDVSVPKVEGEMKVPDVDIKGPKVDIDAPDVEVHDPDWHLKMPKMKMPKFSMPGFKAEGPEVDVNLPKADIDVSGPSVDTDAPDLDIEGPEGKLKGSKFKMPKLNIKAPKVSMPDVDLNLKGPKLKGEIDASVPELEGDLRGPQVDVKGPFVEAEVPDVDLECPDAKLKGPKFKMPEMHFKAPKISMPDVDLHLKGPKVKGDADVSVPKLEGDLTGPSVGVEVPDVELECPDAKLKGPKFKMPDMHFKAPKISMPDVDLHLKGPKVKGDVDVSVPKLEGDLTGPSVGVEVPDVELECPDAKLKGPKFKMPEMHFKTPKISMPDVDLHLKGPKVKGDMDVSVPKVEGEMKVPDVDIKGPKMDIDAPDVDVHGPDWHLKMPKMKMPKFSMPGFKAEGPEVDVNLPKADVVVSGPKVDVEVPDVSLEGPEGKLKGPKLKMPEMHFKAPKISMPDVDLHLKGPKVKGDVDVSLPKLEGDLTGPSVDVEVPDVELECPDAKLKGPKFKMPEMHFKTPKISMPDVNLNLKGPKVKGDMDVSVPKVEGEMKVPDVDIRGPKVDIDAPDVDVHGPDWHLKMPKMKMPKFSMPGFKGEGPEVDVNLPKADVDVSGPKVDVEVPDVSLEGPEGKLKGPKFKMPEMHFKTPKISMPDVDFNLKGPKIKGDVDVSAPKLEGELKGPELDVKGPKLDADMPEVAVEGPNGKWKTPKFKMPDMHFKAPKISMPDLDLHLKSPKAKGEVDVDVPKLEGDLKGPHVDVSGPDIDIEGPEGKLKGPKFKMPDMHFKAPNISMPDVDLNLKGPKIKGDVDVSVPEVEGKLEVPDMNIRGPKVDVNAPDVQAPDWHLKMPKMKMPKFSMPGFKAEGPEVDVNLPKADVDISGPKVDIEGPDVNIEGPEGKLKGPKLKMPEMNIKAPKISMPDFDLHLKGPKVKGDVDVSLPKVEGDLKGPEVDIKGPKVDINAPDVGVQGPDWHLKMPKVKMPKFSMPGFKGEGPDGDVKLPKADIDVSGPKVDIEGPDVNIEGPEGKLKGPKFKMPEMNIKAPKISMPDIDLNLKGPKVKGDVDVSLPKVEGDLKGPEVDIKGPKVDIDAPDVDVHGPDWHLKMPKIKMPKISMPGFKGEGPDVDVNLPKADIDVSGPKVDVECPDVNIEGPEGKWKSPKFKMPEMHFKTPKISMPDIDLNLTGPKIKGDVDVTGPKVEGDLKGPEVDLKGPKVDIDVPDVNVQGPDWHLKMPKMKMPKFSMPGFKAEGPEVDVNLPKADVDVSGPKVDVEGPDVNIEGPEGKLKGPKFKMPEMNIKAPKIPMPDFDLHLKGPKVKGDVDISLPKVEGDLKGPEVDIRGPQVDIDVPDVGVQGPDWHLKMPKVKMPKFSMPGFKGEGPDVDVNLPKADLDVSGPKVDIDVPDVNIEGPEGKLKGPKFKMPEMNIKAPKISMPDIDLNLKGPKVKGDMDVSLPKVEGDMKVPDVDIKGPKVDINAPDVDVQGPDWHLKMPKIKMPKISMPGFKGEGPEVDVNLPKADLDVSGPKVDVDVPDVNIEGPDAKLKGPKFKMPEMNIKAPKISMPDLDLNLKGPKMKGEVDVSLANVEGDLKGPALDIKGPKIDVDAPDIDIHGPDAKLKGPKLKMPDMHVNMPKISMPEIDLNLKGSKLKGDVDVSGPKLEGDIKAPSLDIKGPEVDVSGPKLNIEGKSKKSRFKLPKFNFSGSKVQTPEVDVKGKKPDIDITGPKVDINAPDVEVQGKVKGSKFKMPFLSISSPKVSMPDVELNLKSPKVKGDLDIAGPNLEGDFKGPKVDIKAPEVNLNAPDVDVHGPDWNLKMPKMKMPKFSVSGLKAEGPDVAVDLPKGDINIEGPSMNIEGPDLNVEGPEGGLKGPKFKMPDMNIKAPKISMPDIDLNLKGPKVKGDVDISLPKLEGDLKGPEVDIKGPKVDINAPDVDVHGPDWHLKMPKVKMPKFSMPGFKGEGPEVDVTLPKADIDISGPNVDVDVPDVNIEGPDAKLKGPKFKMPEMNIKAPKISMPDFDLNLKGPKMKGDVVVSLPKVEGDLKGPEVDIKGPKVDIDTPDINIEGSEGKFKGPKFKIPEMHLKAPKISMPDIDLNLKGPKVKGDVDVSLPKMEGDLKGPEVDIKGPKVDINAPDVDVQGPDWHLKMPKVKMPKFSMPGFKGEGPDVDVNLPKADLDVSGPKVDIDVPDVNIEGPEGKLKGPKFKMPEMNIKAPKISMPDIDLNLKGPKVKGDMDVSLPKVEGDMQVPDLDIKGPKVDINAPDVDVRGPDWHLKMPKIKMPKISMPGFKGEGPEVDVNLPKADLDVSGPKVDVDVPDVNIEGPDAKLKGPKFKMPEMNIKAPKISMPDFDLHLKGPKVKGDVDVSLPKMEGDLKAPEVDIKGPKVDIDAPDVDVHGPDWHLKMPKVKMPKFSMPGFKGEGPEVDVNLPKADIDVSGPKVDIDTPDIDIHGPEGKLKGPKFKMPDLHLKAPKISMPEVDLNLKGPKMKGDVDVSLPKVEGDLKGPEVDIKGPKVDIDVPDVDVQGPDWHLKMPKVKMPKFSMPGFKGEGPDVDVNLPKADLDVSGPKVDIDVPDVNIEGPDAKLKGPKFKMPEMNIKAPKISMPDFDLHLKGPKVKGDVDVSLPKVEGDLKGPEVDIKGPKVDIDAPDVDVHGPDWHLKMPKVKMPKFSMPGFKGEGPDVDVTLPKADIEISGPKVDIDAPDVSIEGPDAKLKGPKFKMPEMNIKAPKISMPDIDFNLKGPKVKGDVDVSLPKVEGDLKGPEIDIKGPSLDIDTPDVNIEGPEGKLKGPKFKMPEMNIKAPKISMPDFDLHLKGPKVKGDVDVSLPKVESDLKGPEVDIEGPEGKLKGPKFKMPDVHFKSPQISMSDIDLNLKGPKIKGDMDISVPKLEGDLKGPKVDVKGPKVGIDTPDIDIHGPEGKLKGPKFKMPDLHLKAPKISMPEVDLNLKGPKVKGDMDISLPKVEGDLKGPEVDIRDPKVDIDVPDVDVQGPDWHLKMPKVKMPKFSMPGFKGEGPDVDVNLPKADIDVSGPKVDVDVPDVNIEGPDAKLKGPKFKMPEMSIKAPKISMPDIDLNLKGPKVKGDVDVTLPKVEGDLKGPEADIKGPKVDINTPDVDVHGPDWHLKMPKVKMPKFSMPGFKGEGPDVDVSLPKADIDVSGPKVDVDIPDVNIEGPDAKLKGPKFKMPEINIKAPKISIPDVDLDLKGPKVKGDFDVSVPKVEGTLKGPEVDLKGPRLDFEGPDAKLSGPSLKMPSLEISAPKVTAPDVDLHLKAPKIGFSGPKLEGGEVDLKGPKVEAPSLDVHMDSPDINIEGPDVKIPKFKKPKFGFGAKSPKADIKSPSLDVTVPEAELNLETPEISVGGKGKKSKFKMPKIHMSGPKIKAKKQGFDLNVPGGEIDASLKAPDVDVNIAGPDAALKVDVKSPKTKKTMFGKMYFPDVEFDIKSPKFKAEAPLPSPKLEGELQAPDLELSLPAIHVEGLDIKAKAPKVKMPDVDISVPKIEGDLKGPKVQANLGAPDINIEGLDAKVKTPSFGISAPQVSIPDVNVNLKGPKIKGDVPSVGLEGPDVDLQGPEAKIKFPKFSMPKIGIPGVKMEGGGAEVHAQLPSLEGDLRGPDVKLEGPDVSLKGPGVDLPSVNLSMPKVSGPDLDLNLKGPSLKGDLDASVPSMKVHAPGLNLSGVGGKMQVGGDGVKVPGIDATTKLNVGAPDVTLRGPSLQGDLAVSGDIKCPKVSVGAPDLSLEASEGSIKLPKMKLPQFGISTPGSDLHVNAKGPQVSGELKGPGVDVNLKGPRISAPNVDFNLEGPKVKGSLGATGEIKGPTVGGGLPGIGVQGLEGNLQMPGIKSSGCDVNLPGVNVKLPTGQISGPEIKGGLKGSEVGFHGAAPDISVKGPAFNMASPESDFGINLKGPKIKGGADVSGGVSAPDISLGEGHLSVKGSGGEWKGPQVSSALNLDTSKFAGGLHFSGPKVEGGVKGGQIGLQAPGLSVSGPQGHLESGSGKVTFPKMKIPKFTFSGRELVGREMGVDVHFPKAEASIQAGAGDGEWEESEVKLKKSKIKMPKFNFSKPKGKGGVTGSPEASISGSKGDLKSSKASLGSLEGEAEAEASSPKGKFSLFKSKKPRHRSNSFSDEREFSGPSTPTGTLEFEGGEVSLEGGKVKGKHGKLKFGTFGGLGSKSKGHYEVTGSDDETGKLQGSGVSLASKKSRLSSSSSNDSGNKVGIQLPEVELSVSTKKE</sequence>